<comment type="function">
    <text evidence="11 12 16">RNA-binding protein that acts as a mRNA splicing cofactor by promoting efficient splicing of transcripts that possess weak splice sites. Specifically promotes splicing of many cell-cycle and DNA-repair transcripts that possess weak splice sites, such as TUBG1, KATNB1, TUBGCP2, AURKB, PCNT, AKT1, RAD23A, and FANCG. Probably acts by facilitating the interaction between Serine/arginine-rich proteins such as SRSF2 and the RNA polymerase II. Also binds to DNA; binds to the consensus DNA sequence: 5'-GA[GT]AN[CG][AG]CC-3'. May indirectly repress hepatitis B virus (HBV) core promoter activity and transcription of HBV genes and production of HBV virions. Essential for correct RNA splicing of multiple genes critical for brain development, neuronal migration and metabolism, including TUBG1, FLNA, PNKP, WDR62, PSMD3, PCK2, PFKL, IDH2, and ACY1 (PubMed:27545680).</text>
</comment>
<comment type="subunit">
    <text evidence="10 11 12 17">Interacts with SRSF2. Associates with the spliceosome. Interacts with the AML1-MTG8 (AML1-ETO) fusion protein, possibly leading to trigger signals inhibiting leukemogenesis. Interacts with USH1G (PubMed:34023904).</text>
</comment>
<comment type="subcellular location">
    <subcellularLocation>
        <location evidence="8 12 17">Nucleus speckle</location>
    </subcellularLocation>
    <text>Colocalizes with the pre-mRNA splicing factor SRSF2.</text>
</comment>
<comment type="alternative products">
    <event type="alternative splicing"/>
    <isoform>
        <id>P18583-1</id>
        <name>F</name>
        <sequence type="displayed"/>
    </isoform>
    <isoform>
        <id>P18583-2</id>
        <name>A</name>
        <sequence type="described" ref="VSP_004401 VSP_004402 VSP_004403"/>
    </isoform>
    <isoform>
        <id>P18583-3</id>
        <name>B</name>
        <sequence type="described" ref="VSP_004404 VSP_004405"/>
    </isoform>
    <isoform>
        <id>P18583-4</id>
        <name>C</name>
        <sequence type="described" ref="VSP_004406 VSP_004407"/>
    </isoform>
    <isoform>
        <id>P18583-5</id>
        <name>D</name>
        <sequence type="described" ref="VSP_004403"/>
    </isoform>
    <isoform>
        <id>P18583-6</id>
        <name>E</name>
        <sequence type="described" ref="VSP_004408 VSP_004409"/>
    </isoform>
    <isoform>
        <id>P18583-7</id>
        <name>G</name>
        <sequence type="described" ref="VSP_004410"/>
    </isoform>
    <isoform>
        <id>P18583-8</id>
        <name>H</name>
        <sequence type="described" ref="VSP_004411 VSP_004412"/>
    </isoform>
    <isoform>
        <id>P18583-9</id>
        <name>I</name>
        <sequence type="described" ref="VSP_004413"/>
    </isoform>
    <isoform>
        <id>P18583-10</id>
        <name>J</name>
        <sequence type="described" ref="VSP_004414 VSP_004415"/>
    </isoform>
    <text>Experimental confirmation may be lacking for some isoforms.</text>
</comment>
<comment type="tissue specificity">
    <text>Widely expressed, with the higher expression seen in leukocyte and heart.</text>
</comment>
<comment type="domain">
    <text>Contains 8 types of repeats which are distributed in 3 regions.</text>
</comment>
<comment type="disease" evidence="13 14 15 16">
    <disease id="DI-04860">
        <name>ZTTK syndrome</name>
        <acronym>ZTTKS</acronym>
        <description>An autosomal dominant syndrome characterized by intellectual disability, developmental delay, malformations of the cerebral cortex, epilepsy, vision problems, musculo-skeletal abnormalities, and congenital malformations.</description>
        <dbReference type="MIM" id="617140"/>
    </disease>
    <text>The disease is caused by variants affecting the gene represented in this entry.</text>
</comment>
<comment type="miscellaneous">
    <molecule>Isoform C</molecule>
    <text evidence="28">May be produced at very low levels due to a premature stop codon in the mRNA, leading to nonsense-mediated mRNA decay.</text>
</comment>
<comment type="miscellaneous">
    <molecule>Isoform E</molecule>
    <text evidence="28">May be produced at very low levels due to a premature stop codon in the mRNA, leading to nonsense-mediated mRNA decay.</text>
</comment>
<comment type="sequence caution" evidence="28">
    <conflict type="miscellaneous discrepancy">
        <sequence resource="EMBL-CDS" id="AAH02422"/>
    </conflict>
    <text>Contaminating sequence. Potential poly-A sequence.</text>
</comment>
<comment type="sequence caution" evidence="28">
    <conflict type="erroneous initiation">
        <sequence resource="EMBL-CDS" id="BAA82971"/>
    </conflict>
    <text>Extended N-terminus.</text>
</comment>
<comment type="sequence caution" evidence="28">
    <conflict type="frameshift">
        <sequence resource="EMBL-CDS" id="CAA44793"/>
    </conflict>
</comment>
<comment type="sequence caution" evidence="28">
    <conflict type="miscellaneous discrepancy">
        <sequence resource="EMBL-CDS" id="CAC69885"/>
    </conflict>
    <text>Contaminating sequence. Sequence of unknown origin in the N-terminal part.</text>
</comment>
<protein>
    <recommendedName>
        <fullName>Protein SON</fullName>
    </recommendedName>
    <alternativeName>
        <fullName>Bax antagonist selected in saccharomyces 1</fullName>
        <shortName>BASS1</shortName>
    </alternativeName>
    <alternativeName>
        <fullName>Negative regulatory element-binding protein</fullName>
        <shortName>NRE-binding protein</shortName>
    </alternativeName>
    <alternativeName>
        <fullName>Protein DBP-5</fullName>
    </alternativeName>
    <alternativeName>
        <fullName>SON3</fullName>
    </alternativeName>
</protein>
<proteinExistence type="evidence at protein level"/>
<organism>
    <name type="scientific">Homo sapiens</name>
    <name type="common">Human</name>
    <dbReference type="NCBI Taxonomy" id="9606"/>
    <lineage>
        <taxon>Eukaryota</taxon>
        <taxon>Metazoa</taxon>
        <taxon>Chordata</taxon>
        <taxon>Craniata</taxon>
        <taxon>Vertebrata</taxon>
        <taxon>Euteleostomi</taxon>
        <taxon>Mammalia</taxon>
        <taxon>Eutheria</taxon>
        <taxon>Euarchontoglires</taxon>
        <taxon>Primates</taxon>
        <taxon>Haplorrhini</taxon>
        <taxon>Catarrhini</taxon>
        <taxon>Hominidae</taxon>
        <taxon>Homo</taxon>
    </lineage>
</organism>
<keyword id="KW-0002">3D-structure</keyword>
<keyword id="KW-0007">Acetylation</keyword>
<keyword id="KW-0025">Alternative splicing</keyword>
<keyword id="KW-0131">Cell cycle</keyword>
<keyword id="KW-0225">Disease variant</keyword>
<keyword id="KW-0238">DNA-binding</keyword>
<keyword id="KW-0991">Intellectual disability</keyword>
<keyword id="KW-1017">Isopeptide bond</keyword>
<keyword id="KW-0488">Methylation</keyword>
<keyword id="KW-0507">mRNA processing</keyword>
<keyword id="KW-0508">mRNA splicing</keyword>
<keyword id="KW-0539">Nucleus</keyword>
<keyword id="KW-0597">Phosphoprotein</keyword>
<keyword id="KW-1267">Proteomics identification</keyword>
<keyword id="KW-1185">Reference proteome</keyword>
<keyword id="KW-0677">Repeat</keyword>
<keyword id="KW-0694">RNA-binding</keyword>
<keyword id="KW-0832">Ubl conjugation</keyword>
<gene>
    <name type="primary">SON</name>
    <name type="synonym">C21orf50</name>
    <name type="synonym">DBP5</name>
    <name type="synonym">KIAA1019</name>
    <name type="synonym">NREBP</name>
    <name type="ORF">HSPC310</name>
    <name type="ORF">HSPC312</name>
</gene>
<sequence length="2426" mass="263830">MATNIEQIFRSFVVSKFREIQQELSSGRNEGQLNGETNTPIEGNQAGDAAASARSLPNEEIVQKIEEVLSGVLDTELRYKPDLKEGSRKSRCVSVQTDPTDEIPTKKSKKHKKHKNKKKKKKKEKEKKYKRQPEESESKTKSHDDGNIDLESDSFLKFDSEPSAVALELPTRAFGPSETNESPAVVLEPPVVSMEVSEPHILETLKPATKTAELSVVSTSVISEQSEQSVAVMPEPSMTKILDSFAAAPVPTTTLVLKSSEPVVTMSVEYQMKSVLKSVESTSPEPSKIMLVEPPVAKVLEPSETLVVSSETPTEVYPEPSTSTTMDFPESSAIEALRLPEQPVDVPSEIADSSMTRPQELPELPKTTALELQESSVASAMELPGPPATSMPELQGPPVTPVLELPGPSATPVPELPGPLSTPVPELPGPPATAVPELPGPSVTPVPQLSQELPGLPAPSMGLEPPQEVPEPPVMAQELPGLPLVTAAVELPEQPAVTVAMELTEQPVTTTELEQPVGMTTVEHPGHPEVTTATGLLGQPEATMVLELPGQPVATTALELPGQPSVTGVPELPGLPSATRALELSGQPVATGALELPGPLMAAGALEFSGQSGAAGALELLGQPLATGVLELPGQPGAPELPGQPVATVALEISVQSVVTTSELSTMTVSQSLEVPSTTALESYNTVAQELPTTLVGETSVTVGVDPLMAPESHILASNTMETHILASNTMDSQMLASNTMDSQMLASNTMDSQMLASSTMDSQMLATSSMDSQMLATSSMDSQMLATSTMDSQMLATSSMDSQMLATSSMDSQMLATSSMDSQMLATSSMDSQMLATSTMDSQMLATSTMDSQMLATSSMDSQMLASGTMDSQMLASGTMDAQMLASGTMDAQMLASSTQDSAMLGSKSPDPYRLAQDPYRLAQDPYRLGHDPYRLGHDAYRLGQDPYRLGHDPYRLTPDPYRMSPRPYRIAPRSYRIAPRPYRLAPRPLMLASRRSMMMSYAAERSMMSSYERSMMSYERSMMSPMAERSMMSAYERSMMSAYERSMMSPMAERSMMSAYERSMMSAYERSMMSPMADRSMMSMGADRSMMSSYSAADRSMMSSYSAADRSMMSSYTADRSMMSMAADSYTDSYTDTYTEAYMVPPLPPEEPPTMPPLPPEEPPMTPPLPPEEPPEGPALPTEQSALTAENTWPTEVPSSPSEESVSQPEPPVSQSEISEPSAVPTDYSVSASDPSVLVSEAAVTVPEPPPEPESSITLTPVESAVVAEEHEVVPERPVTCMVSETPAMSAEPTVLASEPPVMSETAETFDSMRASGHVASEVSTSLLVPAVTTPVLAESILEPPAMAAPESSAMAVLESSAVTVLESSTVTVLESSTVTVLEPSVVTVPEPPVVAEPDYVTIPVPVVSALEPSVPVLEPAVSVLQPSMIVSEPSVSVQESTVTVSEPAVTVSEQTQVIPTEVAIESTPMILESSIMSSHVMKGINLSSGDQNLAPEIGMQEIALHSGEEPHAEEHLKGDFYESEHGINIDLNINNHLIAKEMEHNTVCAAGTSPVGEIGEEKILPTSETKQRTVLDTYPGVSEADAGETLSSTGPFALEPDATGTSKGIEFTTASTLSLVNKYDVDLSLTTQDTEHDMVISTSPSGGSEADIEGPLPAKDIHLDLPSNNNLVSKDTEEPLPVKESDQTLAALLSPKESSGGEKEVPPPPKETLPDSGFSANIEDINEADLVRPLLPKDMERLTSLRAGIEGPLLASDVGRDRSAASPVVSSMPERASESSSEEKDDYEIFVKVKDTHEKSKKNKNRDKGEKEKKRDSSLRSRSKRSKSSEHKSRKRTSESRSRARKRSSKSKSHRSQTRSRSRSRRRRRSSRSRSKSRGRRSVSKEKRKRSPKHRSKSRERKRKRSSSRDNRKTVRARSRTPSRRSRSHTPSRRRRSRSVGRRRSFSISPSRRSRTPSRRSRTPSRRSRTPSRRSRTPSRRSRTPSRRSRTPSRRRRSRSVVRRRSFSISPVRLRRSRTPLRRRFSRSPIRRKRSRSSERGRSPKRLTDLDKAQLLEIAKANAAAMCAKAGVPLPPNLKPAPPPTIEEKVAKKSGGATIEELTEKCKQIAQSKEDDDVIVNKPHVSDEEEEEPPFYHHPFKLSEPKPIFFNLNIAAAKPTPPKSQVTLTKEFPVSSGSQHRKKEADSVYGEWVPVEKNGEENKDDDNVFSSNLPSEPVDISTAMSERALAQKRLSENAFDLEAMSMLNRAQERIDAWAQLNSIPGQFTGSTGVQVLTQEQLANTGAQAWIKKDQFLRAAPVTGGMGAVLMRKMGWREGEGLGKNKEGNKEPILVDFKTDRKGLVAVGERAQKRSGNFSAAMKDLSGKHPVSALMEICNKRRWQPPEFLLVHDSGPDHRKHFLFRVLRNGALTRPNCMFFLNRY</sequence>
<name>SON_HUMAN</name>
<dbReference type="EMBL" id="AF380179">
    <property type="protein sequence ID" value="AAL34497.1"/>
    <property type="molecule type" value="mRNA"/>
</dbReference>
<dbReference type="EMBL" id="AF380180">
    <property type="protein sequence ID" value="AAL34498.1"/>
    <property type="molecule type" value="mRNA"/>
</dbReference>
<dbReference type="EMBL" id="AF380181">
    <property type="protein sequence ID" value="AAL34499.1"/>
    <property type="molecule type" value="mRNA"/>
</dbReference>
<dbReference type="EMBL" id="AF380182">
    <property type="protein sequence ID" value="AAL34500.1"/>
    <property type="molecule type" value="mRNA"/>
</dbReference>
<dbReference type="EMBL" id="AF380183">
    <property type="protein sequence ID" value="AAL34501.1"/>
    <property type="molecule type" value="mRNA"/>
</dbReference>
<dbReference type="EMBL" id="AF380184">
    <property type="protein sequence ID" value="AAL34502.1"/>
    <property type="molecule type" value="mRNA"/>
</dbReference>
<dbReference type="EMBL" id="AY026895">
    <property type="protein sequence ID" value="AAK07692.1"/>
    <property type="molecule type" value="mRNA"/>
</dbReference>
<dbReference type="EMBL" id="AB028942">
    <property type="protein sequence ID" value="BAA82971.2"/>
    <property type="status" value="ALT_INIT"/>
    <property type="molecule type" value="mRNA"/>
</dbReference>
<dbReference type="EMBL" id="AP000303">
    <property type="status" value="NOT_ANNOTATED_CDS"/>
    <property type="molecule type" value="Genomic_DNA"/>
</dbReference>
<dbReference type="EMBL" id="AP000304">
    <property type="status" value="NOT_ANNOTATED_CDS"/>
    <property type="molecule type" value="Genomic_DNA"/>
</dbReference>
<dbReference type="EMBL" id="CH471079">
    <property type="protein sequence ID" value="EAX09814.1"/>
    <property type="molecule type" value="Genomic_DNA"/>
</dbReference>
<dbReference type="EMBL" id="CH471079">
    <property type="protein sequence ID" value="EAX09818.1"/>
    <property type="molecule type" value="Genomic_DNA"/>
</dbReference>
<dbReference type="EMBL" id="CH471079">
    <property type="protein sequence ID" value="EAX09821.1"/>
    <property type="molecule type" value="Genomic_DNA"/>
</dbReference>
<dbReference type="EMBL" id="CH471079">
    <property type="protein sequence ID" value="EAX09823.1"/>
    <property type="molecule type" value="Genomic_DNA"/>
</dbReference>
<dbReference type="EMBL" id="AF435977">
    <property type="protein sequence ID" value="AAL30810.1"/>
    <property type="molecule type" value="mRNA"/>
</dbReference>
<dbReference type="EMBL" id="AK024752">
    <property type="protein sequence ID" value="BAB14985.1"/>
    <property type="molecule type" value="mRNA"/>
</dbReference>
<dbReference type="EMBL" id="AF161428">
    <property type="protein sequence ID" value="AAF28988.1"/>
    <property type="molecule type" value="mRNA"/>
</dbReference>
<dbReference type="EMBL" id="AF161430">
    <property type="protein sequence ID" value="AAF28990.1"/>
    <property type="molecule type" value="mRNA"/>
</dbReference>
<dbReference type="EMBL" id="BC002422">
    <property type="protein sequence ID" value="AAH02422.1"/>
    <property type="status" value="ALT_SEQ"/>
    <property type="molecule type" value="mRNA"/>
</dbReference>
<dbReference type="EMBL" id="X63751">
    <property type="protein sequence ID" value="CAC69885.1"/>
    <property type="status" value="ALT_SEQ"/>
    <property type="molecule type" value="mRNA"/>
</dbReference>
<dbReference type="EMBL" id="X63753">
    <property type="protein sequence ID" value="CAA45282.1"/>
    <property type="molecule type" value="mRNA"/>
</dbReference>
<dbReference type="EMBL" id="X63071">
    <property type="protein sequence ID" value="CAA44793.1"/>
    <property type="status" value="ALT_FRAME"/>
    <property type="molecule type" value="mRNA"/>
</dbReference>
<dbReference type="EMBL" id="M36428">
    <property type="protein sequence ID" value="AAA36624.1"/>
    <property type="molecule type" value="Genomic_DNA"/>
</dbReference>
<dbReference type="EMBL" id="AF139897">
    <property type="protein sequence ID" value="AAD50078.1"/>
    <property type="molecule type" value="mRNA"/>
</dbReference>
<dbReference type="CCDS" id="CCDS13629.1">
    <molecule id="P18583-1"/>
</dbReference>
<dbReference type="CCDS" id="CCDS13631.1">
    <molecule id="P18583-3"/>
</dbReference>
<dbReference type="CCDS" id="CCDS74784.1">
    <molecule id="P18583-6"/>
</dbReference>
<dbReference type="PIR" id="S26650">
    <property type="entry name" value="S26650"/>
</dbReference>
<dbReference type="RefSeq" id="NP_001278340.2">
    <molecule id="P18583-6"/>
    <property type="nucleotide sequence ID" value="NM_001291411.2"/>
</dbReference>
<dbReference type="RefSeq" id="NP_001278341.1">
    <property type="nucleotide sequence ID" value="NM_001291412.1"/>
</dbReference>
<dbReference type="RefSeq" id="NP_115571.3">
    <molecule id="P18583-3"/>
    <property type="nucleotide sequence ID" value="NM_032195.3"/>
</dbReference>
<dbReference type="RefSeq" id="NP_620305.3">
    <molecule id="P18583-1"/>
    <property type="nucleotide sequence ID" value="NM_138927.4"/>
</dbReference>
<dbReference type="PDB" id="7CIQ">
    <property type="method" value="X-ray"/>
    <property type="resolution" value="1.59 A"/>
    <property type="chains" value="C=2026-2035"/>
</dbReference>
<dbReference type="PDB" id="7CIR">
    <property type="method" value="X-ray"/>
    <property type="resolution" value="1.81 A"/>
    <property type="chains" value="C=2026-2035"/>
</dbReference>
<dbReference type="PDB" id="7CIS">
    <property type="method" value="X-ray"/>
    <property type="resolution" value="2.10 A"/>
    <property type="chains" value="C=2026-2034"/>
</dbReference>
<dbReference type="PDB" id="7DYN">
    <property type="method" value="X-ray"/>
    <property type="resolution" value="2.00 A"/>
    <property type="chains" value="C=2026-2035"/>
</dbReference>
<dbReference type="PDBsum" id="7CIQ"/>
<dbReference type="PDBsum" id="7CIR"/>
<dbReference type="PDBsum" id="7CIS"/>
<dbReference type="PDBsum" id="7DYN"/>
<dbReference type="SMR" id="P18583"/>
<dbReference type="BioGRID" id="112534">
    <property type="interactions" value="220"/>
</dbReference>
<dbReference type="DIP" id="DIP-42289N"/>
<dbReference type="FunCoup" id="P18583">
    <property type="interactions" value="2487"/>
</dbReference>
<dbReference type="IntAct" id="P18583">
    <property type="interactions" value="85"/>
</dbReference>
<dbReference type="MINT" id="P18583"/>
<dbReference type="STRING" id="9606.ENSP00000348984"/>
<dbReference type="TCDB" id="3.A.18.1.1">
    <property type="family name" value="the nuclear mrna exporter (mrna-e) family"/>
</dbReference>
<dbReference type="GlyConnect" id="2861">
    <molecule id="P18583-1"/>
    <property type="glycosylation" value="1 O-GlcNAc glycan (2 sites)"/>
</dbReference>
<dbReference type="GlyCosmos" id="P18583">
    <property type="glycosylation" value="10 sites, 2 glycans"/>
</dbReference>
<dbReference type="GlyGen" id="P18583">
    <property type="glycosylation" value="22 sites, 2 O-linked glycans (18 sites)"/>
</dbReference>
<dbReference type="iPTMnet" id="P18583"/>
<dbReference type="PhosphoSitePlus" id="P18583"/>
<dbReference type="SwissPalm" id="P18583"/>
<dbReference type="BioMuta" id="SON"/>
<dbReference type="DMDM" id="296453022"/>
<dbReference type="jPOST" id="P18583"/>
<dbReference type="MassIVE" id="P18583"/>
<dbReference type="PaxDb" id="9606-ENSP00000348984"/>
<dbReference type="PeptideAtlas" id="P18583"/>
<dbReference type="ProteomicsDB" id="53592">
    <molecule id="P18583-1"/>
</dbReference>
<dbReference type="ProteomicsDB" id="53593">
    <molecule id="P18583-10"/>
</dbReference>
<dbReference type="ProteomicsDB" id="53594">
    <molecule id="P18583-2"/>
</dbReference>
<dbReference type="ProteomicsDB" id="53595">
    <molecule id="P18583-3"/>
</dbReference>
<dbReference type="ProteomicsDB" id="53596">
    <molecule id="P18583-4"/>
</dbReference>
<dbReference type="ProteomicsDB" id="53597">
    <molecule id="P18583-5"/>
</dbReference>
<dbReference type="ProteomicsDB" id="53598">
    <molecule id="P18583-6"/>
</dbReference>
<dbReference type="ProteomicsDB" id="53599">
    <molecule id="P18583-7"/>
</dbReference>
<dbReference type="ProteomicsDB" id="53600">
    <molecule id="P18583-8"/>
</dbReference>
<dbReference type="ProteomicsDB" id="53601">
    <molecule id="P18583-9"/>
</dbReference>
<dbReference type="Pumba" id="P18583"/>
<dbReference type="Antibodypedia" id="7410">
    <property type="antibodies" value="63 antibodies from 19 providers"/>
</dbReference>
<dbReference type="DNASU" id="6651"/>
<dbReference type="Ensembl" id="ENST00000300278.8">
    <molecule id="P18583-3"/>
    <property type="protein sequence ID" value="ENSP00000300278.2"/>
    <property type="gene ID" value="ENSG00000159140.23"/>
</dbReference>
<dbReference type="Ensembl" id="ENST00000356577.10">
    <molecule id="P18583-1"/>
    <property type="protein sequence ID" value="ENSP00000348984.4"/>
    <property type="gene ID" value="ENSG00000159140.23"/>
</dbReference>
<dbReference type="Ensembl" id="ENST00000381679.8">
    <molecule id="P18583-6"/>
    <property type="protein sequence ID" value="ENSP00000371095.4"/>
    <property type="gene ID" value="ENSG00000159140.23"/>
</dbReference>
<dbReference type="Ensembl" id="ENST00000455528.5">
    <molecule id="P18583-4"/>
    <property type="protein sequence ID" value="ENSP00000399783.1"/>
    <property type="gene ID" value="ENSG00000159140.23"/>
</dbReference>
<dbReference type="GeneID" id="6651"/>
<dbReference type="KEGG" id="hsa:6651"/>
<dbReference type="MANE-Select" id="ENST00000356577.10">
    <property type="protein sequence ID" value="ENSP00000348984.4"/>
    <property type="RefSeq nucleotide sequence ID" value="NM_138927.4"/>
    <property type="RefSeq protein sequence ID" value="NP_620305.3"/>
</dbReference>
<dbReference type="UCSC" id="uc002ysc.5">
    <molecule id="P18583-1"/>
    <property type="organism name" value="human"/>
</dbReference>
<dbReference type="AGR" id="HGNC:11183"/>
<dbReference type="CTD" id="6651"/>
<dbReference type="DisGeNET" id="6651"/>
<dbReference type="GeneCards" id="SON"/>
<dbReference type="HGNC" id="HGNC:11183">
    <property type="gene designation" value="SON"/>
</dbReference>
<dbReference type="HPA" id="ENSG00000159140">
    <property type="expression patterns" value="Low tissue specificity"/>
</dbReference>
<dbReference type="MalaCards" id="SON"/>
<dbReference type="MIM" id="182465">
    <property type="type" value="gene"/>
</dbReference>
<dbReference type="MIM" id="617140">
    <property type="type" value="phenotype"/>
</dbReference>
<dbReference type="neXtProt" id="NX_P18583"/>
<dbReference type="OpenTargets" id="ENSG00000159140"/>
<dbReference type="Orphanet" id="500150">
    <property type="disease" value="Brain malformations-musculoskeletal abnormalities-facial dysmorphism-intellectual disability syndrome"/>
</dbReference>
<dbReference type="PharmGKB" id="PA36020"/>
<dbReference type="VEuPathDB" id="HostDB:ENSG00000159140"/>
<dbReference type="eggNOG" id="ENOG502QPQ7">
    <property type="taxonomic scope" value="Eukaryota"/>
</dbReference>
<dbReference type="GeneTree" id="ENSGT00730000111141"/>
<dbReference type="HOGENOM" id="CLU_230016_0_0_1"/>
<dbReference type="InParanoid" id="P18583"/>
<dbReference type="OMA" id="NETEQCT"/>
<dbReference type="OrthoDB" id="786951at2759"/>
<dbReference type="PAN-GO" id="P18583">
    <property type="GO annotations" value="2 GO annotations based on evolutionary models"/>
</dbReference>
<dbReference type="PhylomeDB" id="P18583"/>
<dbReference type="TreeFam" id="TF330344"/>
<dbReference type="PathwayCommons" id="P18583"/>
<dbReference type="SignaLink" id="P18583"/>
<dbReference type="SIGNOR" id="P18583"/>
<dbReference type="BioGRID-ORCS" id="6651">
    <property type="hits" value="700 hits in 1169 CRISPR screens"/>
</dbReference>
<dbReference type="CD-CODE" id="804901D1">
    <property type="entry name" value="Nuclear speckle"/>
</dbReference>
<dbReference type="ChiTaRS" id="SON">
    <property type="organism name" value="human"/>
</dbReference>
<dbReference type="GeneWiki" id="SON"/>
<dbReference type="GenomeRNAi" id="6651"/>
<dbReference type="Pharos" id="P18583">
    <property type="development level" value="Tbio"/>
</dbReference>
<dbReference type="PRO" id="PR:P18583"/>
<dbReference type="Proteomes" id="UP000005640">
    <property type="component" value="Chromosome 21"/>
</dbReference>
<dbReference type="RNAct" id="P18583">
    <property type="molecule type" value="protein"/>
</dbReference>
<dbReference type="Bgee" id="ENSG00000159140">
    <property type="expression patterns" value="Expressed in pylorus and 211 other cell types or tissues"/>
</dbReference>
<dbReference type="ExpressionAtlas" id="P18583">
    <property type="expression patterns" value="baseline and differential"/>
</dbReference>
<dbReference type="GO" id="GO:0016607">
    <property type="term" value="C:nuclear speck"/>
    <property type="evidence" value="ECO:0000314"/>
    <property type="project" value="HPA"/>
</dbReference>
<dbReference type="GO" id="GO:0003677">
    <property type="term" value="F:DNA binding"/>
    <property type="evidence" value="ECO:0007669"/>
    <property type="project" value="UniProtKB-KW"/>
</dbReference>
<dbReference type="GO" id="GO:0003723">
    <property type="term" value="F:RNA binding"/>
    <property type="evidence" value="ECO:0000314"/>
    <property type="project" value="UniProtKB"/>
</dbReference>
<dbReference type="GO" id="GO:0000226">
    <property type="term" value="P:microtubule cytoskeleton organization"/>
    <property type="evidence" value="ECO:0000315"/>
    <property type="project" value="UniProtKB"/>
</dbReference>
<dbReference type="GO" id="GO:0000281">
    <property type="term" value="P:mitotic cytokinesis"/>
    <property type="evidence" value="ECO:0000315"/>
    <property type="project" value="UniProtKB"/>
</dbReference>
<dbReference type="GO" id="GO:0006397">
    <property type="term" value="P:mRNA processing"/>
    <property type="evidence" value="ECO:0000314"/>
    <property type="project" value="UniProtKB"/>
</dbReference>
<dbReference type="GO" id="GO:0043066">
    <property type="term" value="P:negative regulation of apoptotic process"/>
    <property type="evidence" value="ECO:0000314"/>
    <property type="project" value="UniProtKB"/>
</dbReference>
<dbReference type="GO" id="GO:0051726">
    <property type="term" value="P:regulation of cell cycle"/>
    <property type="evidence" value="ECO:0000315"/>
    <property type="project" value="UniProtKB"/>
</dbReference>
<dbReference type="GO" id="GO:0048024">
    <property type="term" value="P:regulation of mRNA splicing, via spliceosome"/>
    <property type="evidence" value="ECO:0000314"/>
    <property type="project" value="UniProtKB"/>
</dbReference>
<dbReference type="GO" id="GO:0043484">
    <property type="term" value="P:regulation of RNA splicing"/>
    <property type="evidence" value="ECO:0000315"/>
    <property type="project" value="UniProtKB"/>
</dbReference>
<dbReference type="GO" id="GO:0008380">
    <property type="term" value="P:RNA splicing"/>
    <property type="evidence" value="ECO:0007669"/>
    <property type="project" value="UniProtKB-KW"/>
</dbReference>
<dbReference type="FunFam" id="3.30.160.20:FF:000042">
    <property type="entry name" value="SON DNA binding protein"/>
    <property type="match status" value="1"/>
</dbReference>
<dbReference type="Gene3D" id="3.30.160.20">
    <property type="match status" value="1"/>
</dbReference>
<dbReference type="InterPro" id="IPR014720">
    <property type="entry name" value="dsRBD_dom"/>
</dbReference>
<dbReference type="InterPro" id="IPR000467">
    <property type="entry name" value="G_patch_dom"/>
</dbReference>
<dbReference type="InterPro" id="IPR032922">
    <property type="entry name" value="SON"/>
</dbReference>
<dbReference type="InterPro" id="IPR036322">
    <property type="entry name" value="WD40_repeat_dom_sf"/>
</dbReference>
<dbReference type="PANTHER" id="PTHR46528">
    <property type="entry name" value="PROTEIN SON"/>
    <property type="match status" value="1"/>
</dbReference>
<dbReference type="PANTHER" id="PTHR46528:SF1">
    <property type="entry name" value="PROTEIN SON"/>
    <property type="match status" value="1"/>
</dbReference>
<dbReference type="Pfam" id="PF14709">
    <property type="entry name" value="DND1_DSRM"/>
    <property type="match status" value="1"/>
</dbReference>
<dbReference type="Pfam" id="PF01585">
    <property type="entry name" value="G-patch"/>
    <property type="match status" value="1"/>
</dbReference>
<dbReference type="Pfam" id="PF17069">
    <property type="entry name" value="RSRP"/>
    <property type="match status" value="1"/>
</dbReference>
<dbReference type="SMART" id="SM00443">
    <property type="entry name" value="G_patch"/>
    <property type="match status" value="1"/>
</dbReference>
<dbReference type="SUPFAM" id="SSF54768">
    <property type="entry name" value="dsRNA-binding domain-like"/>
    <property type="match status" value="1"/>
</dbReference>
<dbReference type="SUPFAM" id="SSF50978">
    <property type="entry name" value="WD40 repeat-like"/>
    <property type="match status" value="1"/>
</dbReference>
<dbReference type="PROSITE" id="PS50137">
    <property type="entry name" value="DS_RBD"/>
    <property type="match status" value="1"/>
</dbReference>
<dbReference type="PROSITE" id="PS50174">
    <property type="entry name" value="G_PATCH"/>
    <property type="match status" value="1"/>
</dbReference>
<feature type="initiator methionine" description="Removed" evidence="31 36">
    <location>
        <position position="1"/>
    </location>
</feature>
<feature type="chain" id="PRO_0000072037" description="Protein SON">
    <location>
        <begin position="2"/>
        <end position="2426"/>
    </location>
</feature>
<feature type="repeat" description="1-1">
    <location>
        <begin position="1006"/>
        <end position="1011"/>
    </location>
</feature>
<feature type="repeat" description="1-2">
    <location>
        <begin position="1014"/>
        <end position="1019"/>
    </location>
</feature>
<feature type="repeat" description="1-3">
    <location>
        <begin position="1021"/>
        <end position="1026"/>
    </location>
</feature>
<feature type="repeat" description="1-4">
    <location>
        <begin position="1030"/>
        <end position="1035"/>
    </location>
</feature>
<feature type="repeat" description="1-5">
    <location>
        <begin position="1038"/>
        <end position="1043"/>
    </location>
</feature>
<feature type="repeat" description="1-6">
    <location>
        <begin position="1046"/>
        <end position="1051"/>
    </location>
</feature>
<feature type="repeat" description="1-7">
    <location>
        <begin position="1055"/>
        <end position="1060"/>
    </location>
</feature>
<feature type="repeat" description="1-8">
    <location>
        <begin position="1063"/>
        <end position="1068"/>
    </location>
</feature>
<feature type="repeat" description="1-9">
    <location>
        <begin position="1071"/>
        <end position="1076"/>
    </location>
</feature>
<feature type="repeat" description="1-10">
    <location>
        <begin position="1080"/>
        <end position="1085"/>
    </location>
</feature>
<feature type="repeat" description="1-11">
    <location>
        <begin position="1089"/>
        <end position="1094"/>
    </location>
</feature>
<feature type="repeat" description="1-12">
    <location>
        <begin position="1100"/>
        <end position="1105"/>
    </location>
</feature>
<feature type="repeat" description="1-13">
    <location>
        <begin position="1111"/>
        <end position="1116"/>
    </location>
</feature>
<feature type="repeat" description="1-14">
    <location>
        <begin position="1121"/>
        <end position="1126"/>
    </location>
</feature>
<feature type="repeat" description="2-1">
    <location>
        <begin position="1925"/>
        <end position="1931"/>
    </location>
</feature>
<feature type="repeat" description="3-1">
    <location>
        <begin position="1934"/>
        <end position="1952"/>
    </location>
</feature>
<feature type="repeat" description="2-2">
    <location>
        <begin position="1953"/>
        <end position="1959"/>
    </location>
</feature>
<feature type="repeat" description="2-3">
    <location>
        <begin position="1960"/>
        <end position="1966"/>
    </location>
</feature>
<feature type="repeat" description="2-4">
    <location>
        <begin position="1967"/>
        <end position="1973"/>
    </location>
</feature>
<feature type="repeat" description="2-5">
    <location>
        <begin position="1974"/>
        <end position="1980"/>
    </location>
</feature>
<feature type="repeat" description="2-6">
    <location>
        <begin position="1981"/>
        <end position="1987"/>
    </location>
</feature>
<feature type="repeat" description="2-7">
    <location>
        <begin position="1988"/>
        <end position="1994"/>
    </location>
</feature>
<feature type="repeat" description="3-2">
    <location>
        <begin position="1995"/>
        <end position="2013"/>
    </location>
</feature>
<feature type="domain" description="G-patch" evidence="2">
    <location>
        <begin position="2305"/>
        <end position="2351"/>
    </location>
</feature>
<feature type="domain" description="DRBM" evidence="3">
    <location>
        <begin position="2371"/>
        <end position="2426"/>
    </location>
</feature>
<feature type="region of interest" description="Disordered" evidence="4">
    <location>
        <begin position="24"/>
        <end position="56"/>
    </location>
</feature>
<feature type="region of interest" description="Disordered" evidence="4">
    <location>
        <begin position="77"/>
        <end position="155"/>
    </location>
</feature>
<feature type="region of interest" description="Disordered" evidence="4">
    <location>
        <begin position="305"/>
        <end position="328"/>
    </location>
</feature>
<feature type="region of interest" description="Disordered" evidence="4">
    <location>
        <begin position="406"/>
        <end position="442"/>
    </location>
</feature>
<feature type="region of interest" description="17 X 10 AA tandem repeats of L-A-[ST]-[NSG]-[TS]-MDSQM">
    <location>
        <begin position="726"/>
        <end position="895"/>
    </location>
</feature>
<feature type="region of interest" description="11 X 7 AA tandem repeats of [DR]-P-Y-R-[LI][AG][QHP]">
    <location>
        <begin position="912"/>
        <end position="988"/>
    </location>
</feature>
<feature type="region of interest" description="14 X 6 AA repeats of [ED]-R-S-M-M-S">
    <location>
        <begin position="1006"/>
        <end position="1126"/>
    </location>
</feature>
<feature type="region of interest" description="Disordered" evidence="4">
    <location>
        <begin position="1144"/>
        <end position="1236"/>
    </location>
</feature>
<feature type="region of interest" description="3 X 11 AA tandem repats of P-P-L-P-P-E-E-P-P-[TME]-[MTG]">
    <location>
        <begin position="1147"/>
        <end position="1179"/>
    </location>
</feature>
<feature type="region of interest" description="4 X 8 AA tandem repeats of V-L-E-SS-[AVT]-VT">
    <location>
        <begin position="1359"/>
        <end position="1390"/>
    </location>
</feature>
<feature type="region of interest" description="Disordered" evidence="4">
    <location>
        <begin position="1645"/>
        <end position="1722"/>
    </location>
</feature>
<feature type="region of interest" description="Disordered" evidence="4">
    <location>
        <begin position="1754"/>
        <end position="2054"/>
    </location>
</feature>
<feature type="region of interest" description="7 X 7 AA repeats of P-S-R-R-S-R-[TS]">
    <location>
        <begin position="1925"/>
        <end position="1994"/>
    </location>
</feature>
<feature type="region of interest" description="2 X 19 AA repeats of P-S-R-R-R-R-S-R-S-V-V-R-R-R-S-F-S-I-S">
    <location>
        <begin position="1934"/>
        <end position="2013"/>
    </location>
</feature>
<feature type="region of interest" description="3 X tandem repeats of [ST]-P-[VLI]-R-[RL]-[RK]-[RF]-S-R">
    <location>
        <begin position="2013"/>
        <end position="2039"/>
    </location>
</feature>
<feature type="region of interest" description="Disordered" evidence="4">
    <location>
        <begin position="2200"/>
        <end position="2220"/>
    </location>
</feature>
<feature type="compositionally biased region" description="Polar residues" evidence="4">
    <location>
        <begin position="24"/>
        <end position="42"/>
    </location>
</feature>
<feature type="compositionally biased region" description="Basic and acidic residues" evidence="4">
    <location>
        <begin position="77"/>
        <end position="88"/>
    </location>
</feature>
<feature type="compositionally biased region" description="Basic residues" evidence="4">
    <location>
        <begin position="106"/>
        <end position="130"/>
    </location>
</feature>
<feature type="compositionally biased region" description="Basic and acidic residues" evidence="4">
    <location>
        <begin position="131"/>
        <end position="146"/>
    </location>
</feature>
<feature type="compositionally biased region" description="Pro residues" evidence="4">
    <location>
        <begin position="409"/>
        <end position="442"/>
    </location>
</feature>
<feature type="compositionally biased region" description="Pro residues" evidence="4">
    <location>
        <begin position="1147"/>
        <end position="1180"/>
    </location>
</feature>
<feature type="compositionally biased region" description="Polar residues" evidence="4">
    <location>
        <begin position="1186"/>
        <end position="1196"/>
    </location>
</feature>
<feature type="compositionally biased region" description="Low complexity" evidence="4">
    <location>
        <begin position="1198"/>
        <end position="1224"/>
    </location>
</feature>
<feature type="compositionally biased region" description="Basic and acidic residues" evidence="4">
    <location>
        <begin position="1677"/>
        <end position="1689"/>
    </location>
</feature>
<feature type="compositionally biased region" description="Basic and acidic residues" evidence="4">
    <location>
        <begin position="1790"/>
        <end position="1801"/>
    </location>
</feature>
<feature type="compositionally biased region" description="Basic and acidic residues" evidence="4">
    <location>
        <begin position="1809"/>
        <end position="1822"/>
    </location>
</feature>
<feature type="compositionally biased region" description="Basic and acidic residues" evidence="4">
    <location>
        <begin position="1830"/>
        <end position="1845"/>
    </location>
</feature>
<feature type="compositionally biased region" description="Basic residues" evidence="4">
    <location>
        <begin position="1846"/>
        <end position="1909"/>
    </location>
</feature>
<feature type="compositionally biased region" description="Basic residues" evidence="4">
    <location>
        <begin position="1917"/>
        <end position="1948"/>
    </location>
</feature>
<feature type="compositionally biased region" description="Basic residues" evidence="4">
    <location>
        <begin position="1955"/>
        <end position="2009"/>
    </location>
</feature>
<feature type="compositionally biased region" description="Basic residues" evidence="4">
    <location>
        <begin position="2016"/>
        <end position="2038"/>
    </location>
</feature>
<feature type="compositionally biased region" description="Basic and acidic residues" evidence="4">
    <location>
        <begin position="2039"/>
        <end position="2054"/>
    </location>
</feature>
<feature type="modified residue" description="N-acetylalanine" evidence="31 36">
    <location>
        <position position="2"/>
    </location>
</feature>
<feature type="modified residue" description="N6-acetyllysine" evidence="32">
    <location>
        <position position="16"/>
    </location>
</feature>
<feature type="modified residue" description="Phosphoserine" evidence="34 37">
    <location>
        <position position="94"/>
    </location>
</feature>
<feature type="modified residue" description="Phosphoserine" evidence="34 37">
    <location>
        <position position="142"/>
    </location>
</feature>
<feature type="modified residue" description="Phosphoserine" evidence="30 33 34 35 37 39">
    <location>
        <position position="152"/>
    </location>
</feature>
<feature type="modified residue" description="Phosphoserine" evidence="33 34 35 37">
    <location>
        <position position="154"/>
    </location>
</feature>
<feature type="modified residue" description="Phosphoserine" evidence="35 37">
    <location>
        <position position="160"/>
    </location>
</feature>
<feature type="modified residue" description="Phosphoserine" evidence="33 34 35 39">
    <location>
        <position position="283"/>
    </location>
</feature>
<feature type="modified residue" description="N6-acetyllysine" evidence="32">
    <location>
        <position position="288"/>
    </location>
</feature>
<feature type="modified residue" description="Phosphothreonine" evidence="39">
    <location>
        <position position="400"/>
    </location>
</feature>
<feature type="modified residue" description="Omega-N-methylarginine" evidence="38">
    <location>
        <position position="950"/>
    </location>
</feature>
<feature type="modified residue" description="Phosphothreonine" evidence="37">
    <location>
        <position position="959"/>
    </location>
</feature>
<feature type="modified residue" description="Phosphoserine" evidence="37">
    <location>
        <position position="998"/>
    </location>
</feature>
<feature type="modified residue" description="Asymmetric dimethylarginine" evidence="1">
    <location>
        <position position="1007"/>
    </location>
</feature>
<feature type="modified residue" description="Asymmetric dimethylarginine" evidence="1">
    <location>
        <position position="1022"/>
    </location>
</feature>
<feature type="modified residue" description="Phosphoserine" evidence="37">
    <location>
        <position position="1035"/>
    </location>
</feature>
<feature type="modified residue" description="Phosphoserine" evidence="37">
    <location>
        <position position="1043"/>
    </location>
</feature>
<feature type="modified residue" description="Phosphoserine" evidence="37">
    <location>
        <position position="1060"/>
    </location>
</feature>
<feature type="modified residue" description="Phosphoserine" evidence="37">
    <location>
        <position position="1068"/>
    </location>
</feature>
<feature type="modified residue" description="Phosphoserine" evidence="37">
    <location>
        <position position="1082"/>
    </location>
</feature>
<feature type="modified residue" description="Phosphoserine" evidence="30 33 35 39">
    <location>
        <position position="1556"/>
    </location>
</feature>
<feature type="modified residue" description="Phosphoserine" evidence="39">
    <location>
        <position position="1651"/>
    </location>
</feature>
<feature type="modified residue" description="Phosphoserine" evidence="29 30 34 35 37 39">
    <location>
        <position position="1697"/>
    </location>
</feature>
<feature type="modified residue" description="Phosphoserine" evidence="37">
    <location>
        <position position="1701"/>
    </location>
</feature>
<feature type="modified residue" description="Phosphoserine" evidence="37">
    <location>
        <position position="1747"/>
    </location>
</feature>
<feature type="modified residue" description="Phosphoserine" evidence="37">
    <location>
        <position position="1759"/>
    </location>
</feature>
<feature type="modified residue" description="Phosphoserine" evidence="39">
    <location>
        <position position="1766"/>
    </location>
</feature>
<feature type="modified residue" description="Phosphoserine" evidence="34 35 37 39">
    <location>
        <position position="1769"/>
    </location>
</feature>
<feature type="modified residue" description="Phosphoserine" evidence="37">
    <location>
        <position position="1782"/>
    </location>
</feature>
<feature type="modified residue" description="Phosphoserine" evidence="30 37">
    <location>
        <position position="1783"/>
    </location>
</feature>
<feature type="modified residue" description="Phosphoserine" evidence="30 37">
    <location>
        <position position="1948"/>
    </location>
</feature>
<feature type="modified residue" description="Phosphoserine" evidence="30 37">
    <location>
        <position position="1950"/>
    </location>
</feature>
<feature type="modified residue" description="Phosphoserine" evidence="37">
    <location>
        <position position="1952"/>
    </location>
</feature>
<feature type="modified residue" description="Phosphoserine" evidence="34 37">
    <location>
        <position position="2009"/>
    </location>
</feature>
<feature type="modified residue" description="Phosphoserine" evidence="34 35 37">
    <location>
        <position position="2011"/>
    </location>
</feature>
<feature type="modified residue" description="Phosphoserine" evidence="34 35 37">
    <location>
        <position position="2013"/>
    </location>
</feature>
<feature type="modified residue" description="Phosphoserine" evidence="37">
    <location>
        <position position="2029"/>
    </location>
</feature>
<feature type="modified residue" description="Phosphoserine" evidence="37">
    <location>
        <position position="2031"/>
    </location>
</feature>
<feature type="modified residue" description="N6-acetyllysine; alternate" evidence="32">
    <location>
        <position position="2055"/>
    </location>
</feature>
<feature type="modified residue" description="Phosphoserine" evidence="37">
    <location>
        <position position="2129"/>
    </location>
</feature>
<feature type="modified residue" description="Phosphothreonine" evidence="34">
    <location>
        <position position="2163"/>
    </location>
</feature>
<feature type="modified residue" description="Phosphoserine" evidence="37 39">
    <location>
        <position position="2238"/>
    </location>
</feature>
<feature type="cross-link" description="Glycyl lysine isopeptide (Lys-Gly) (interchain with G-Cter in SUMO2)" evidence="41">
    <location>
        <position position="64"/>
    </location>
</feature>
<feature type="cross-link" description="Glycyl lysine isopeptide (Lys-Gly) (interchain with G-Cter in SUMO2); alternate" evidence="41">
    <location>
        <position position="2055"/>
    </location>
</feature>
<feature type="cross-link" description="Glycyl lysine isopeptide (Lys-Gly) (interchain with G-Cter in SUMO2)" evidence="41">
    <location>
        <position position="2092"/>
    </location>
</feature>
<feature type="cross-link" description="Glycyl lysine isopeptide (Lys-Gly) (interchain with G-Cter in SUMO2)" evidence="40 41">
    <location>
        <position position="2149"/>
    </location>
</feature>
<feature type="splice variant" id="VSP_004411" description="In isoform H." evidence="25">
    <original>VAQ</original>
    <variation>NVP</variation>
    <location>
        <begin position="687"/>
        <end position="689"/>
    </location>
</feature>
<feature type="splice variant" id="VSP_004401" description="In isoform A." evidence="23 26 27">
    <original>V</original>
    <variation>Q</variation>
    <location>
        <position position="687"/>
    </location>
</feature>
<feature type="splice variant" id="VSP_004402" description="In isoform A." evidence="23 26 27">
    <location>
        <begin position="688"/>
        <end position="1006"/>
    </location>
</feature>
<feature type="splice variant" id="VSP_004412" description="In isoform H." evidence="25">
    <location>
        <begin position="690"/>
        <end position="2416"/>
    </location>
</feature>
<feature type="splice variant" id="VSP_004410" description="In isoform G." evidence="22">
    <location>
        <begin position="748"/>
        <end position="787"/>
    </location>
</feature>
<feature type="splice variant" id="VSP_004413" description="In isoform I." evidence="24">
    <original>S</original>
    <variation>SMDSQMLASNTMDSQMLASNTMDSQMLASSTMDSQMLATSS</variation>
    <location>
        <position position="770"/>
    </location>
</feature>
<feature type="splice variant" id="VSP_004408" description="In isoform E." evidence="23">
    <original>K</original>
    <variation>F</variation>
    <location>
        <position position="2108"/>
    </location>
</feature>
<feature type="splice variant" id="VSP_004409" description="In isoform E." evidence="23">
    <location>
        <begin position="2109"/>
        <end position="2426"/>
    </location>
</feature>
<feature type="splice variant" id="VSP_004404" description="In isoform B." evidence="20 23">
    <original>PVDISTAMSERALAQKRLSENAFDLEAMSMLNRAQERIDAWAQLNSIPGQFTGSTGVQVLTQEQLANTGAQAWIKKDQFLRAAP</original>
    <variation>GRVKRQGRVRRQMKQPAASHLTVTRCNSLCGTKPQSEKHRIAENSVITSLPNIGPSLHLWEGSPRYNYLASRFASRLYSSRFWW</variation>
    <location>
        <begin position="2220"/>
        <end position="2303"/>
    </location>
</feature>
<feature type="splice variant" id="VSP_004414" description="In isoform J." evidence="21">
    <original>IDAWAQLNSIPGQFTGSTGVQVLTQE</original>
    <variation>VCSSFLKKIIIYHQPTHTNVPVLMSK</variation>
    <location>
        <begin position="2257"/>
        <end position="2282"/>
    </location>
</feature>
<feature type="splice variant" id="VSP_004415" description="In isoform J." evidence="21">
    <location>
        <begin position="2283"/>
        <end position="2426"/>
    </location>
</feature>
<feature type="splice variant" id="VSP_004406" description="In isoform C." evidence="23">
    <original>DQFLRAAPVTGGMGAVLMRKMGWREGEGLG</original>
    <variation>GQILVAVFLPRSVPAVLFTTLLLPRPRISS</variation>
    <location>
        <begin position="2296"/>
        <end position="2325"/>
    </location>
</feature>
<feature type="splice variant" id="VSP_004405" description="In isoform B." evidence="20 23">
    <location>
        <begin position="2304"/>
        <end position="2426"/>
    </location>
</feature>
<feature type="splice variant" id="VSP_004407" description="In isoform C." evidence="23">
    <location>
        <begin position="2326"/>
        <end position="2426"/>
    </location>
</feature>
<feature type="splice variant" id="VSP_004403" description="In isoform A and isoform D." evidence="23 26 27">
    <original>RNGALTRPNCMFFLNRY</original>
    <variation>INGSAYQPSFASPNKKHAKATAATVVLQAMGLVPKDLMANATCFRSASRR</variation>
    <location>
        <begin position="2410"/>
        <end position="2426"/>
    </location>
</feature>
<feature type="sequence variant" id="VAR_065456" description="In dbSNP:rs35622138." evidence="5 6 7 8 9 18">
    <original>P</original>
    <variation>S</variation>
    <location>
        <position position="473"/>
    </location>
</feature>
<feature type="sequence variant" id="VAR_065457" description="In dbSNP:rs13049658.">
    <original>T</original>
    <variation>M</variation>
    <location>
        <position position="555"/>
    </location>
</feature>
<feature type="sequence variant" id="VAR_056990" description="In dbSNP:rs11908823.">
    <original>T</original>
    <variation>A</variation>
    <location>
        <position position="870"/>
    </location>
</feature>
<feature type="sequence variant" id="VAR_065458" description="In dbSNP:rs13433428." evidence="5 6 7 8 9">
    <original>S</original>
    <variation>L</variation>
    <location>
        <position position="1202"/>
    </location>
</feature>
<feature type="sequence variant" id="VAR_056991" description="In dbSNP:rs13047599." evidence="5 6 19">
    <original>R</original>
    <variation>C</variation>
    <location>
        <position position="1575"/>
    </location>
</feature>
<feature type="sequence variant" id="VAR_077864" description="In ZTTKS; uncertain significance; de novo mutation associated in cis with Y-1843." evidence="15">
    <original>T</original>
    <variation>S</variation>
    <location>
        <position position="1637"/>
    </location>
</feature>
<feature type="sequence variant" id="VAR_077865" description="In ZTTKS; uncertain significance; de novo mutation associated in cis with S-1637." evidence="15">
    <original>S</original>
    <variation>Y</variation>
    <location>
        <position position="1843"/>
    </location>
</feature>
<feature type="sequence conflict" description="In Ref. 7; BAB14985." evidence="28" ref="7">
    <original>E</original>
    <variation>K</variation>
    <location>
        <position position="126"/>
    </location>
</feature>
<feature type="sequence conflict" description="In Ref. 7; BAB14985." evidence="28" ref="7">
    <original>Y</original>
    <variation>K</variation>
    <location>
        <position position="129"/>
    </location>
</feature>
<feature type="sequence conflict" description="In Ref. 12; CAA45282." evidence="28" ref="12">
    <original>Y</original>
    <variation>S</variation>
    <location>
        <position position="1402"/>
    </location>
</feature>
<feature type="sequence conflict" description="In Ref. 12; CAA45282." evidence="28" ref="12">
    <original>N</original>
    <variation>I</variation>
    <location>
        <position position="1495"/>
    </location>
</feature>
<feature type="sequence conflict" description="In Ref. 12; CAA45282." evidence="28" ref="12">
    <original>N</original>
    <variation>S</variation>
    <location>
        <position position="1538"/>
    </location>
</feature>
<feature type="sequence conflict" description="In Ref. 12; CAA45282." evidence="28" ref="12">
    <original>I</original>
    <variation>II</variation>
    <location>
        <position position="1643"/>
    </location>
</feature>
<feature type="sequence conflict" description="In Ref. 12; CAA45282." evidence="28" ref="12">
    <original>L</original>
    <variation>I</variation>
    <location>
        <position position="1692"/>
    </location>
</feature>
<feature type="sequence conflict" description="In Ref. 14; AAA36624." evidence="28" ref="14">
    <original>A</original>
    <variation>R</variation>
    <location>
        <position position="1693"/>
    </location>
</feature>
<feature type="sequence conflict" description="In Ref. 12; CAA45282 and 14; AAA36624." evidence="28" ref="12 14">
    <original>SS</original>
    <variation>PH</variation>
    <location>
        <begin position="1820"/>
        <end position="1821"/>
    </location>
</feature>
<feature type="sequence conflict" description="In Ref. 15; AAD50078." evidence="28" ref="15">
    <original>R</original>
    <variation>S</variation>
    <location>
        <position position="1939"/>
    </location>
</feature>
<feature type="sequence conflict" description="In Ref. 2; AAK07692 and 12; CAA45282." evidence="28" ref="2 12">
    <original>E</original>
    <variation>V</variation>
    <location>
        <position position="2090"/>
    </location>
</feature>
<feature type="sequence conflict" description="In Ref. 2; AAK07692 and 12; CAA45282." evidence="28" ref="2 12">
    <original>P</original>
    <variation>F</variation>
    <location>
        <position position="2148"/>
    </location>
</feature>
<feature type="sequence conflict" description="In Ref. 2; AAK07692." evidence="28" ref="2">
    <original>ALTR</original>
    <variation>SPYQ</variation>
    <location>
        <begin position="2413"/>
        <end position="2416"/>
    </location>
</feature>
<evidence type="ECO:0000250" key="1">
    <source>
        <dbReference type="UniProtKB" id="Q9QX47"/>
    </source>
</evidence>
<evidence type="ECO:0000255" key="2">
    <source>
        <dbReference type="PROSITE-ProRule" id="PRU00092"/>
    </source>
</evidence>
<evidence type="ECO:0000255" key="3">
    <source>
        <dbReference type="PROSITE-ProRule" id="PRU00266"/>
    </source>
</evidence>
<evidence type="ECO:0000256" key="4">
    <source>
        <dbReference type="SAM" id="MobiDB-lite"/>
    </source>
</evidence>
<evidence type="ECO:0000269" key="5">
    <source>
    </source>
</evidence>
<evidence type="ECO:0000269" key="6">
    <source>
    </source>
</evidence>
<evidence type="ECO:0000269" key="7">
    <source>
    </source>
</evidence>
<evidence type="ECO:0000269" key="8">
    <source>
    </source>
</evidence>
<evidence type="ECO:0000269" key="9">
    <source>
    </source>
</evidence>
<evidence type="ECO:0000269" key="10">
    <source>
    </source>
</evidence>
<evidence type="ECO:0000269" key="11">
    <source>
    </source>
</evidence>
<evidence type="ECO:0000269" key="12">
    <source>
    </source>
</evidence>
<evidence type="ECO:0000269" key="13">
    <source>
    </source>
</evidence>
<evidence type="ECO:0000269" key="14">
    <source>
    </source>
</evidence>
<evidence type="ECO:0000269" key="15">
    <source>
    </source>
</evidence>
<evidence type="ECO:0000269" key="16">
    <source>
    </source>
</evidence>
<evidence type="ECO:0000269" key="17">
    <source>
    </source>
</evidence>
<evidence type="ECO:0000269" key="18">
    <source ref="5"/>
</evidence>
<evidence type="ECO:0000269" key="19">
    <source ref="8"/>
</evidence>
<evidence type="ECO:0000303" key="20">
    <source>
    </source>
</evidence>
<evidence type="ECO:0000303" key="21">
    <source>
    </source>
</evidence>
<evidence type="ECO:0000303" key="22">
    <source>
    </source>
</evidence>
<evidence type="ECO:0000303" key="23">
    <source>
    </source>
</evidence>
<evidence type="ECO:0000303" key="24">
    <source>
    </source>
</evidence>
<evidence type="ECO:0000303" key="25">
    <source>
    </source>
</evidence>
<evidence type="ECO:0000303" key="26">
    <source>
    </source>
</evidence>
<evidence type="ECO:0000303" key="27">
    <source>
    </source>
</evidence>
<evidence type="ECO:0000305" key="28"/>
<evidence type="ECO:0007744" key="29">
    <source>
    </source>
</evidence>
<evidence type="ECO:0007744" key="30">
    <source>
    </source>
</evidence>
<evidence type="ECO:0007744" key="31">
    <source>
    </source>
</evidence>
<evidence type="ECO:0007744" key="32">
    <source>
    </source>
</evidence>
<evidence type="ECO:0007744" key="33">
    <source>
    </source>
</evidence>
<evidence type="ECO:0007744" key="34">
    <source>
    </source>
</evidence>
<evidence type="ECO:0007744" key="35">
    <source>
    </source>
</evidence>
<evidence type="ECO:0007744" key="36">
    <source>
    </source>
</evidence>
<evidence type="ECO:0007744" key="37">
    <source>
    </source>
</evidence>
<evidence type="ECO:0007744" key="38">
    <source>
    </source>
</evidence>
<evidence type="ECO:0007744" key="39">
    <source>
    </source>
</evidence>
<evidence type="ECO:0007744" key="40">
    <source>
    </source>
</evidence>
<evidence type="ECO:0007744" key="41">
    <source>
    </source>
</evidence>
<reference key="1">
    <citation type="journal article" date="2001" name="Genomics">
        <title>From PREDs and open reading frames to cDNA isolation: revisiting the human chromosome 21 transcription map.</title>
        <authorList>
            <person name="Reymond A."/>
            <person name="Friedli M."/>
            <person name="Neergaard Henrichsen C."/>
            <person name="Chapot F."/>
            <person name="Deutsch S."/>
            <person name="Ucla C."/>
            <person name="Rossier C."/>
            <person name="Lyle R."/>
            <person name="Guipponi M."/>
            <person name="Antonarakis S.E."/>
        </authorList>
    </citation>
    <scope>NUCLEOTIDE SEQUENCE [MRNA] (ISOFORMS A; B; C; D; E AND F)</scope>
    <scope>VARIANTS SER-473; SER-473 AND LEU-1202</scope>
</reference>
<reference key="2">
    <citation type="journal article" date="2001" name="J. Biol. Chem.">
        <title>Transcription repression of human hepatitis B virus genes by negative regulatory element-binding protein/SON.</title>
        <authorList>
            <person name="Sun C.-T."/>
            <person name="Lo W.-Y."/>
            <person name="Wang I.-H."/>
            <person name="Lo Y.-H."/>
            <person name="Shiou S.-R."/>
            <person name="Lai C.-K."/>
            <person name="Ting L.-P."/>
        </authorList>
    </citation>
    <scope>NUCLEOTIDE SEQUENCE [MRNA] (ISOFORM G)</scope>
    <scope>VARIANTS SER-473 AND LEU-1202; CYS-1575</scope>
    <source>
        <tissue>Liver</tissue>
    </source>
</reference>
<reference key="3">
    <citation type="journal article" date="1999" name="DNA Res.">
        <title>Prediction of the coding sequences of unidentified human genes. XIV. The complete sequences of 100 new cDNA clones from brain which code for large proteins in vitro.</title>
        <authorList>
            <person name="Kikuno R."/>
            <person name="Nagase T."/>
            <person name="Ishikawa K."/>
            <person name="Hirosawa M."/>
            <person name="Miyajima N."/>
            <person name="Tanaka A."/>
            <person name="Kotani H."/>
            <person name="Nomura N."/>
            <person name="Ohara O."/>
        </authorList>
    </citation>
    <scope>NUCLEOTIDE SEQUENCE [LARGE SCALE MRNA] (ISOFORM B)</scope>
    <scope>VARIANTS SER-473 AND LEU-1202; CYS-1575</scope>
    <source>
        <tissue>Brain</tissue>
    </source>
</reference>
<reference key="4">
    <citation type="journal article" date="2000" name="Nature">
        <title>The DNA sequence of human chromosome 21.</title>
        <authorList>
            <person name="Hattori M."/>
            <person name="Fujiyama A."/>
            <person name="Taylor T.D."/>
            <person name="Watanabe H."/>
            <person name="Yada T."/>
            <person name="Park H.-S."/>
            <person name="Toyoda A."/>
            <person name="Ishii K."/>
            <person name="Totoki Y."/>
            <person name="Choi D.-K."/>
            <person name="Groner Y."/>
            <person name="Soeda E."/>
            <person name="Ohki M."/>
            <person name="Takagi T."/>
            <person name="Sakaki Y."/>
            <person name="Taudien S."/>
            <person name="Blechschmidt K."/>
            <person name="Polley A."/>
            <person name="Menzel U."/>
            <person name="Delabar J."/>
            <person name="Kumpf K."/>
            <person name="Lehmann R."/>
            <person name="Patterson D."/>
            <person name="Reichwald K."/>
            <person name="Rump A."/>
            <person name="Schillhabel M."/>
            <person name="Schudy A."/>
            <person name="Zimmermann W."/>
            <person name="Rosenthal A."/>
            <person name="Kudoh J."/>
            <person name="Shibuya K."/>
            <person name="Kawasaki K."/>
            <person name="Asakawa S."/>
            <person name="Shintani A."/>
            <person name="Sasaki T."/>
            <person name="Nagamine K."/>
            <person name="Mitsuyama S."/>
            <person name="Antonarakis S.E."/>
            <person name="Minoshima S."/>
            <person name="Shimizu N."/>
            <person name="Nordsiek G."/>
            <person name="Hornischer K."/>
            <person name="Brandt P."/>
            <person name="Scharfe M."/>
            <person name="Schoen O."/>
            <person name="Desario A."/>
            <person name="Reichelt J."/>
            <person name="Kauer G."/>
            <person name="Bloecker H."/>
            <person name="Ramser J."/>
            <person name="Beck A."/>
            <person name="Klages S."/>
            <person name="Hennig S."/>
            <person name="Riesselmann L."/>
            <person name="Dagand E."/>
            <person name="Wehrmeyer S."/>
            <person name="Borzym K."/>
            <person name="Gardiner K."/>
            <person name="Nizetic D."/>
            <person name="Francis F."/>
            <person name="Lehrach H."/>
            <person name="Reinhardt R."/>
            <person name="Yaspo M.-L."/>
        </authorList>
    </citation>
    <scope>NUCLEOTIDE SEQUENCE [LARGE SCALE GENOMIC DNA]</scope>
</reference>
<reference key="5">
    <citation type="submission" date="2005-09" db="EMBL/GenBank/DDBJ databases">
        <authorList>
            <person name="Mural R.J."/>
            <person name="Istrail S."/>
            <person name="Sutton G.G."/>
            <person name="Florea L."/>
            <person name="Halpern A.L."/>
            <person name="Mobarry C.M."/>
            <person name="Lippert R."/>
            <person name="Walenz B."/>
            <person name="Shatkay H."/>
            <person name="Dew I."/>
            <person name="Miller J.R."/>
            <person name="Flanigan M.J."/>
            <person name="Edwards N.J."/>
            <person name="Bolanos R."/>
            <person name="Fasulo D."/>
            <person name="Halldorsson B.V."/>
            <person name="Hannenhalli S."/>
            <person name="Turner R."/>
            <person name="Yooseph S."/>
            <person name="Lu F."/>
            <person name="Nusskern D.R."/>
            <person name="Shue B.C."/>
            <person name="Zheng X.H."/>
            <person name="Zhong F."/>
            <person name="Delcher A.L."/>
            <person name="Huson D.H."/>
            <person name="Kravitz S.A."/>
            <person name="Mouchard L."/>
            <person name="Reinert K."/>
            <person name="Remington K.A."/>
            <person name="Clark A.G."/>
            <person name="Waterman M.S."/>
            <person name="Eichler E.E."/>
            <person name="Adams M.D."/>
            <person name="Hunkapiller M.W."/>
            <person name="Myers E.W."/>
            <person name="Venter J.C."/>
        </authorList>
    </citation>
    <scope>NUCLEOTIDE SEQUENCE [LARGE SCALE GENOMIC DNA]</scope>
    <scope>VARIANT SER-473</scope>
</reference>
<reference key="6">
    <citation type="journal article" date="2003" name="Gene">
        <title>mRNA 5' region sequence incompleteness: a potential source of systematic errors in translation initiation codon assignment in human mRNAs.</title>
        <authorList>
            <person name="Casadei R."/>
            <person name="Strippoli P."/>
            <person name="D'Addabbo P."/>
            <person name="Canaider S."/>
            <person name="Lenzi L."/>
            <person name="Vitale L."/>
            <person name="Giannone S."/>
            <person name="Frabetti F."/>
            <person name="Facchin F."/>
            <person name="Carinci P."/>
            <person name="Zannotti M."/>
        </authorList>
    </citation>
    <scope>NUCLEOTIDE SEQUENCE [MRNA] OF 1-689 (ISOFORM H)</scope>
    <source>
        <tissue>Placenta</tissue>
    </source>
</reference>
<reference key="7">
    <citation type="journal article" date="2004" name="Nat. Genet.">
        <title>Complete sequencing and characterization of 21,243 full-length human cDNAs.</title>
        <authorList>
            <person name="Ota T."/>
            <person name="Suzuki Y."/>
            <person name="Nishikawa T."/>
            <person name="Otsuki T."/>
            <person name="Sugiyama T."/>
            <person name="Irie R."/>
            <person name="Wakamatsu A."/>
            <person name="Hayashi K."/>
            <person name="Sato H."/>
            <person name="Nagai K."/>
            <person name="Kimura K."/>
            <person name="Makita H."/>
            <person name="Sekine M."/>
            <person name="Obayashi M."/>
            <person name="Nishi T."/>
            <person name="Shibahara T."/>
            <person name="Tanaka T."/>
            <person name="Ishii S."/>
            <person name="Yamamoto J."/>
            <person name="Saito K."/>
            <person name="Kawai Y."/>
            <person name="Isono Y."/>
            <person name="Nakamura Y."/>
            <person name="Nagahari K."/>
            <person name="Murakami K."/>
            <person name="Yasuda T."/>
            <person name="Iwayanagi T."/>
            <person name="Wagatsuma M."/>
            <person name="Shiratori A."/>
            <person name="Sudo H."/>
            <person name="Hosoiri T."/>
            <person name="Kaku Y."/>
            <person name="Kodaira H."/>
            <person name="Kondo H."/>
            <person name="Sugawara M."/>
            <person name="Takahashi M."/>
            <person name="Kanda K."/>
            <person name="Yokoi T."/>
            <person name="Furuya T."/>
            <person name="Kikkawa E."/>
            <person name="Omura Y."/>
            <person name="Abe K."/>
            <person name="Kamihara K."/>
            <person name="Katsuta N."/>
            <person name="Sato K."/>
            <person name="Tanikawa M."/>
            <person name="Yamazaki M."/>
            <person name="Ninomiya K."/>
            <person name="Ishibashi T."/>
            <person name="Yamashita H."/>
            <person name="Murakawa K."/>
            <person name="Fujimori K."/>
            <person name="Tanai H."/>
            <person name="Kimata M."/>
            <person name="Watanabe M."/>
            <person name="Hiraoka S."/>
            <person name="Chiba Y."/>
            <person name="Ishida S."/>
            <person name="Ono Y."/>
            <person name="Takiguchi S."/>
            <person name="Watanabe S."/>
            <person name="Yosida M."/>
            <person name="Hotuta T."/>
            <person name="Kusano J."/>
            <person name="Kanehori K."/>
            <person name="Takahashi-Fujii A."/>
            <person name="Hara H."/>
            <person name="Tanase T.-O."/>
            <person name="Nomura Y."/>
            <person name="Togiya S."/>
            <person name="Komai F."/>
            <person name="Hara R."/>
            <person name="Takeuchi K."/>
            <person name="Arita M."/>
            <person name="Imose N."/>
            <person name="Musashino K."/>
            <person name="Yuuki H."/>
            <person name="Oshima A."/>
            <person name="Sasaki N."/>
            <person name="Aotsuka S."/>
            <person name="Yoshikawa Y."/>
            <person name="Matsunawa H."/>
            <person name="Ichihara T."/>
            <person name="Shiohata N."/>
            <person name="Sano S."/>
            <person name="Moriya S."/>
            <person name="Momiyama H."/>
            <person name="Satoh N."/>
            <person name="Takami S."/>
            <person name="Terashima Y."/>
            <person name="Suzuki O."/>
            <person name="Nakagawa S."/>
            <person name="Senoh A."/>
            <person name="Mizoguchi H."/>
            <person name="Goto Y."/>
            <person name="Shimizu F."/>
            <person name="Wakebe H."/>
            <person name="Hishigaki H."/>
            <person name="Watanabe T."/>
            <person name="Sugiyama A."/>
            <person name="Takemoto M."/>
            <person name="Kawakami B."/>
            <person name="Yamazaki M."/>
            <person name="Watanabe K."/>
            <person name="Kumagai A."/>
            <person name="Itakura S."/>
            <person name="Fukuzumi Y."/>
            <person name="Fujimori Y."/>
            <person name="Komiyama M."/>
            <person name="Tashiro H."/>
            <person name="Tanigami A."/>
            <person name="Fujiwara T."/>
            <person name="Ono T."/>
            <person name="Yamada K."/>
            <person name="Fujii Y."/>
            <person name="Ozaki K."/>
            <person name="Hirao M."/>
            <person name="Ohmori Y."/>
            <person name="Kawabata A."/>
            <person name="Hikiji T."/>
            <person name="Kobatake N."/>
            <person name="Inagaki H."/>
            <person name="Ikema Y."/>
            <person name="Okamoto S."/>
            <person name="Okitani R."/>
            <person name="Kawakami T."/>
            <person name="Noguchi S."/>
            <person name="Itoh T."/>
            <person name="Shigeta K."/>
            <person name="Senba T."/>
            <person name="Matsumura K."/>
            <person name="Nakajima Y."/>
            <person name="Mizuno T."/>
            <person name="Morinaga M."/>
            <person name="Sasaki M."/>
            <person name="Togashi T."/>
            <person name="Oyama M."/>
            <person name="Hata H."/>
            <person name="Watanabe M."/>
            <person name="Komatsu T."/>
            <person name="Mizushima-Sugano J."/>
            <person name="Satoh T."/>
            <person name="Shirai Y."/>
            <person name="Takahashi Y."/>
            <person name="Nakagawa K."/>
            <person name="Okumura K."/>
            <person name="Nagase T."/>
            <person name="Nomura N."/>
            <person name="Kikuchi H."/>
            <person name="Masuho Y."/>
            <person name="Yamashita R."/>
            <person name="Nakai K."/>
            <person name="Yada T."/>
            <person name="Nakamura Y."/>
            <person name="Ohara O."/>
            <person name="Isogai T."/>
            <person name="Sugano S."/>
        </authorList>
    </citation>
    <scope>NUCLEOTIDE SEQUENCE [LARGE SCALE MRNA] OF 1-130</scope>
    <source>
        <tissue>Smooth muscle</tissue>
    </source>
</reference>
<reference key="8">
    <citation type="submission" date="1999-05" db="EMBL/GenBank/DDBJ databases">
        <title>Human partial CDS from CD34+ stem cells.</title>
        <authorList>
            <person name="Ye M."/>
            <person name="Zhang Q.-H."/>
            <person name="Zhou J."/>
            <person name="Shen Y."/>
            <person name="Wu X.-Y."/>
            <person name="Guan Z.Q."/>
            <person name="Wang L."/>
            <person name="Fan H.-Y."/>
            <person name="Mao Y.-F."/>
            <person name="Dai M."/>
            <person name="Huang Q.-H."/>
            <person name="Chen S.-J."/>
            <person name="Chen Z."/>
        </authorList>
    </citation>
    <scope>NUCLEOTIDE SEQUENCE [LARGE SCALE MRNA] OF 1-114</scope>
    <scope>VARIANT CYS-1575</scope>
    <source>
        <tissue>Umbilical cord blood</tissue>
    </source>
</reference>
<reference key="9">
    <citation type="journal article" date="2004" name="Genome Res.">
        <title>The status, quality, and expansion of the NIH full-length cDNA project: the Mammalian Gene Collection (MGC).</title>
        <authorList>
            <consortium name="The MGC Project Team"/>
        </authorList>
    </citation>
    <scope>NUCLEOTIDE SEQUENCE [LARGE SCALE MRNA] OF 544-1903</scope>
    <source>
        <tissue>Brain</tissue>
    </source>
</reference>
<reference key="10">
    <citation type="journal article" date="1991" name="Mol. Biol. (Mosk.)">
        <title>Identification of a protein product of a novel human gene SON and the biological effect upon administering a changed form of this gene into mammalian cells.</title>
        <authorList>
            <person name="Chumakov I.M."/>
            <person name="Berdichevskii F.B."/>
            <person name="Sokolova N.V."/>
            <person name="Reznikov M.V."/>
            <person name="Prasolov V.S."/>
        </authorList>
    </citation>
    <scope>NUCLEOTIDE SEQUENCE [MRNA] OF 554-2426 (ISOFORM A)</scope>
</reference>
<reference key="11">
    <citation type="journal article" date="1992" name="Mol. Biol. (Mosk.)">
        <title>The human SON gene: the large and small transcripts contains various 5'-terminal sequences.</title>
        <authorList>
            <person name="Bliskovskii V.V."/>
            <person name="Kirillov A.V."/>
            <person name="Zakhariev V.M."/>
            <person name="Chumakov I.M."/>
        </authorList>
    </citation>
    <scope>NUCLEOTIDE SEQUENCE [MRNA] OF 709-1079 (ISOFORM I)</scope>
    <source>
        <tissue>Placenta</tissue>
    </source>
</reference>
<reference key="12">
    <citation type="journal article" date="1992" name="Mol. Biol. (Mosk.)">
        <title>Coding part of the son gene small transcript contains four areas of complete tandem repeats.</title>
        <authorList>
            <person name="Bliskovskii V.V."/>
            <person name="Berdichevskii F.B."/>
            <person name="Tkachenko A.V."/>
            <person name="Belova M.E."/>
            <person name="Chumakov I.M."/>
        </authorList>
    </citation>
    <scope>NUCLEOTIDE SEQUENCE [MRNA] OF 1009-2426 (ISOFORMS A/D)</scope>
    <scope>VARIANTS SER-473 AND LEU-1202</scope>
    <source>
        <tissue>Placenta</tissue>
    </source>
</reference>
<reference key="13">
    <citation type="journal article" date="1992" name="Chromosoma">
        <title>A cDNA clone for a novel nuclear protein with DNA binding activity.</title>
        <authorList>
            <person name="Mattioni T."/>
            <person name="Hume C.R."/>
            <person name="Konigorski S."/>
            <person name="Hayes P."/>
            <person name="Osterweil Z."/>
            <person name="Lee J.S."/>
        </authorList>
    </citation>
    <scope>NUCLEOTIDE SEQUENCE [MRNA] OF 1145-2426 (ISOFORM F)</scope>
    <scope>SUBCELLULAR LOCATION</scope>
    <scope>VARIANTS SER-473 AND LEU-1202</scope>
</reference>
<reference key="14">
    <citation type="journal article" date="1988" name="Mol. Biol. (Mosk.)">
        <title>Decoding of the primary structure of the son3 region in human genome: identification of a new protein with unusual structure and homology with DNA-binding proteins.</title>
        <authorList>
            <person name="Berdichevskii F.B."/>
            <person name="Chumakov I.M."/>
            <person name="Kiselev L.L."/>
        </authorList>
    </citation>
    <scope>NUCLEOTIDE SEQUENCE [MRNA] OF 1693-2175 (ISOFORM A)</scope>
</reference>
<reference key="15">
    <citation type="journal article" date="1999" name="Yeast">
        <title>A selection system for human apoptosis inhibitors using yeast.</title>
        <authorList>
            <person name="Greenhalf W."/>
            <person name="Lee J."/>
            <person name="Chaudhuri B."/>
        </authorList>
    </citation>
    <scope>NUCLEOTIDE SEQUENCE [MRNA] OF 1939-2426 (ISOFORM J)</scope>
    <source>
        <tissue>Cerebellum</tissue>
    </source>
</reference>
<reference key="16">
    <citation type="journal article" date="2004" name="Genome Biol.">
        <title>An unappreciated role for RNA surveillance.</title>
        <authorList>
            <person name="Hillman R.T."/>
            <person name="Green R.E."/>
            <person name="Brenner S.E."/>
        </authorList>
    </citation>
    <scope>SPLICE ISOFORM(S) THAT ARE POTENTIAL NMD TARGET(S)</scope>
</reference>
<reference key="17">
    <citation type="journal article" date="2006" name="Cell">
        <title>Global, in vivo, and site-specific phosphorylation dynamics in signaling networks.</title>
        <authorList>
            <person name="Olsen J.V."/>
            <person name="Blagoev B."/>
            <person name="Gnad F."/>
            <person name="Macek B."/>
            <person name="Kumar C."/>
            <person name="Mortensen P."/>
            <person name="Mann M."/>
        </authorList>
    </citation>
    <scope>PHOSPHORYLATION [LARGE SCALE ANALYSIS] AT SER-1697</scope>
    <scope>IDENTIFICATION BY MASS SPECTROMETRY [LARGE SCALE ANALYSIS]</scope>
    <source>
        <tissue>Cervix carcinoma</tissue>
    </source>
</reference>
<reference key="18">
    <citation type="journal article" date="2008" name="Proc. Natl. Acad. Sci. U.S.A.">
        <title>A quantitative atlas of mitotic phosphorylation.</title>
        <authorList>
            <person name="Dephoure N."/>
            <person name="Zhou C."/>
            <person name="Villen J."/>
            <person name="Beausoleil S.A."/>
            <person name="Bakalarski C.E."/>
            <person name="Elledge S.J."/>
            <person name="Gygi S.P."/>
        </authorList>
    </citation>
    <scope>PHOSPHORYLATION [LARGE SCALE ANALYSIS] AT SER-152; SER-1556; SER-1697; SER-1783; SER-1948 AND SER-1950</scope>
    <scope>IDENTIFICATION BY MASS SPECTROMETRY [LARGE SCALE ANALYSIS]</scope>
    <source>
        <tissue>Cervix carcinoma</tissue>
    </source>
</reference>
<reference key="19">
    <citation type="journal article" date="2008" name="Proc. Natl. Acad. Sci. U.S.A.">
        <title>Disruption of the NHR4 domain structure in AML1-ETO abrogates SON binding and promotes leukemogenesis.</title>
        <authorList>
            <person name="Ahn E.Y."/>
            <person name="Yan M."/>
            <person name="Malakhova O.A."/>
            <person name="Lo M.C."/>
            <person name="Boyapati A."/>
            <person name="Ommen H.B."/>
            <person name="Hines R."/>
            <person name="Hokland P."/>
            <person name="Zhang D.E."/>
        </authorList>
    </citation>
    <scope>INTERACTION WITH AML1-MTG8 FUSION PROTEIN</scope>
</reference>
<reference key="20">
    <citation type="journal article" date="2009" name="Anal. Chem.">
        <title>Lys-N and trypsin cover complementary parts of the phosphoproteome in a refined SCX-based approach.</title>
        <authorList>
            <person name="Gauci S."/>
            <person name="Helbig A.O."/>
            <person name="Slijper M."/>
            <person name="Krijgsveld J."/>
            <person name="Heck A.J."/>
            <person name="Mohammed S."/>
        </authorList>
    </citation>
    <scope>ACETYLATION [LARGE SCALE ANALYSIS] AT ALA-2</scope>
    <scope>CLEAVAGE OF INITIATOR METHIONINE [LARGE SCALE ANALYSIS]</scope>
    <scope>IDENTIFICATION BY MASS SPECTROMETRY [LARGE SCALE ANALYSIS]</scope>
</reference>
<reference key="21">
    <citation type="journal article" date="2009" name="Sci. Signal.">
        <title>Quantitative phosphoproteomic analysis of T cell receptor signaling reveals system-wide modulation of protein-protein interactions.</title>
        <authorList>
            <person name="Mayya V."/>
            <person name="Lundgren D.H."/>
            <person name="Hwang S.-I."/>
            <person name="Rezaul K."/>
            <person name="Wu L."/>
            <person name="Eng J.K."/>
            <person name="Rodionov V."/>
            <person name="Han D.K."/>
        </authorList>
    </citation>
    <scope>PHOSPHORYLATION [LARGE SCALE ANALYSIS] AT SER-152; SER-154; SER-283 AND SER-1556</scope>
    <scope>IDENTIFICATION BY MASS SPECTROMETRY [LARGE SCALE ANALYSIS]</scope>
    <source>
        <tissue>Leukemic T-cell</tissue>
    </source>
</reference>
<reference key="22">
    <citation type="journal article" date="2009" name="Science">
        <title>Lysine acetylation targets protein complexes and co-regulates major cellular functions.</title>
        <authorList>
            <person name="Choudhary C."/>
            <person name="Kumar C."/>
            <person name="Gnad F."/>
            <person name="Nielsen M.L."/>
            <person name="Rehman M."/>
            <person name="Walther T.C."/>
            <person name="Olsen J.V."/>
            <person name="Mann M."/>
        </authorList>
    </citation>
    <scope>ACETYLATION [LARGE SCALE ANALYSIS] AT LYS-16; LYS-288 AND LYS-2055</scope>
    <scope>IDENTIFICATION BY MASS SPECTROMETRY [LARGE SCALE ANALYSIS]</scope>
</reference>
<reference key="23">
    <citation type="journal article" date="2010" name="Cell Cycle">
        <title>SON is a spliceosome-associated factor required for mitotic progression.</title>
        <authorList>
            <person name="Huen M.S."/>
            <person name="Sy S.M."/>
            <person name="Leung K.M."/>
            <person name="Ching Y.P."/>
            <person name="Tipoe G.L."/>
            <person name="Man C."/>
            <person name="Dong S."/>
            <person name="Chen J."/>
        </authorList>
    </citation>
    <scope>FUNCTION</scope>
    <scope>INTERACTION WITH THE SPLICEOSOME</scope>
</reference>
<reference key="24">
    <citation type="journal article" date="2010" name="Sci. Signal.">
        <title>Quantitative phosphoproteomics reveals widespread full phosphorylation site occupancy during mitosis.</title>
        <authorList>
            <person name="Olsen J.V."/>
            <person name="Vermeulen M."/>
            <person name="Santamaria A."/>
            <person name="Kumar C."/>
            <person name="Miller M.L."/>
            <person name="Jensen L.J."/>
            <person name="Gnad F."/>
            <person name="Cox J."/>
            <person name="Jensen T.S."/>
            <person name="Nigg E.A."/>
            <person name="Brunak S."/>
            <person name="Mann M."/>
        </authorList>
    </citation>
    <scope>PHOSPHORYLATION [LARGE SCALE ANALYSIS] AT SER-94; SER-142; SER-152; SER-154; SER-283; SER-1697; SER-1769; SER-2009; SER-2011; SER-2013 AND THR-2163</scope>
    <scope>IDENTIFICATION BY MASS SPECTROMETRY [LARGE SCALE ANALYSIS]</scope>
    <source>
        <tissue>Cervix carcinoma</tissue>
    </source>
</reference>
<reference key="25">
    <citation type="journal article" date="2011" name="BMC Syst. Biol.">
        <title>Initial characterization of the human central proteome.</title>
        <authorList>
            <person name="Burkard T.R."/>
            <person name="Planyavsky M."/>
            <person name="Kaupe I."/>
            <person name="Breitwieser F.P."/>
            <person name="Buerckstuemmer T."/>
            <person name="Bennett K.L."/>
            <person name="Superti-Furga G."/>
            <person name="Colinge J."/>
        </authorList>
    </citation>
    <scope>IDENTIFICATION BY MASS SPECTROMETRY [LARGE SCALE ANALYSIS]</scope>
</reference>
<reference key="26">
    <citation type="journal article" date="2011" name="Mol. Cell">
        <title>SON controls cell-cycle progression by coordinated regulation of RNA splicing.</title>
        <authorList>
            <person name="Ahn E.Y."/>
            <person name="Dekelver R.C."/>
            <person name="Lo M.C."/>
            <person name="Nguyen T.A."/>
            <person name="Matsuura S."/>
            <person name="Boyapati A."/>
            <person name="Pandit S."/>
            <person name="Fu X.D."/>
            <person name="Zhang D.E."/>
        </authorList>
    </citation>
    <scope>FUNCTION</scope>
    <scope>SUBCELLULAR LOCATION</scope>
    <scope>RNA-BINDING</scope>
    <scope>INTERACTION WITH SRSF2</scope>
</reference>
<reference key="27">
    <citation type="journal article" date="2011" name="Sci. Signal.">
        <title>System-wide temporal characterization of the proteome and phosphoproteome of human embryonic stem cell differentiation.</title>
        <authorList>
            <person name="Rigbolt K.T."/>
            <person name="Prokhorova T.A."/>
            <person name="Akimov V."/>
            <person name="Henningsen J."/>
            <person name="Johansen P.T."/>
            <person name="Kratchmarova I."/>
            <person name="Kassem M."/>
            <person name="Mann M."/>
            <person name="Olsen J.V."/>
            <person name="Blagoev B."/>
        </authorList>
    </citation>
    <scope>PHOSPHORYLATION [LARGE SCALE ANALYSIS] AT SER-152; SER-154; SER-160; SER-283; SER-1556; SER-1697; SER-1769; SER-2011 AND SER-2013</scope>
    <scope>IDENTIFICATION BY MASS SPECTROMETRY [LARGE SCALE ANALYSIS]</scope>
</reference>
<reference key="28">
    <citation type="journal article" date="2012" name="Proc. Natl. Acad. Sci. U.S.A.">
        <title>N-terminal acetylome analyses and functional insights of the N-terminal acetyltransferase NatB.</title>
        <authorList>
            <person name="Van Damme P."/>
            <person name="Lasa M."/>
            <person name="Polevoda B."/>
            <person name="Gazquez C."/>
            <person name="Elosegui-Artola A."/>
            <person name="Kim D.S."/>
            <person name="De Juan-Pardo E."/>
            <person name="Demeyer K."/>
            <person name="Hole K."/>
            <person name="Larrea E."/>
            <person name="Timmerman E."/>
            <person name="Prieto J."/>
            <person name="Arnesen T."/>
            <person name="Sherman F."/>
            <person name="Gevaert K."/>
            <person name="Aldabe R."/>
        </authorList>
    </citation>
    <scope>ACETYLATION [LARGE SCALE ANALYSIS] AT ALA-2</scope>
    <scope>CLEAVAGE OF INITIATOR METHIONINE [LARGE SCALE ANALYSIS]</scope>
    <scope>IDENTIFICATION BY MASS SPECTROMETRY [LARGE SCALE ANALYSIS]</scope>
</reference>
<reference key="29">
    <citation type="journal article" date="2013" name="J. Proteome Res.">
        <title>Toward a comprehensive characterization of a human cancer cell phosphoproteome.</title>
        <authorList>
            <person name="Zhou H."/>
            <person name="Di Palma S."/>
            <person name="Preisinger C."/>
            <person name="Peng M."/>
            <person name="Polat A.N."/>
            <person name="Heck A.J."/>
            <person name="Mohammed S."/>
        </authorList>
    </citation>
    <scope>PHOSPHORYLATION [LARGE SCALE ANALYSIS] AT SER-94; SER-142; SER-152; SER-154; SER-160; THR-959; SER-998; SER-1035; SER-1043; SER-1060; SER-1068; SER-1082; SER-1697; SER-1701; SER-1747; SER-1759; SER-1769; SER-1782; SER-1783; SER-1948; SER-1950; SER-1952; SER-2009; SER-2011; SER-2013; SER-2029; SER-2031; SER-2129 AND SER-2238</scope>
    <scope>IDENTIFICATION BY MASS SPECTROMETRY [LARGE SCALE ANALYSIS]</scope>
    <source>
        <tissue>Cervix carcinoma</tissue>
        <tissue>Erythroleukemia</tissue>
    </source>
</reference>
<reference key="30">
    <citation type="journal article" date="2014" name="J. Proteomics">
        <title>An enzyme assisted RP-RPLC approach for in-depth analysis of human liver phosphoproteome.</title>
        <authorList>
            <person name="Bian Y."/>
            <person name="Song C."/>
            <person name="Cheng K."/>
            <person name="Dong M."/>
            <person name="Wang F."/>
            <person name="Huang J."/>
            <person name="Sun D."/>
            <person name="Wang L."/>
            <person name="Ye M."/>
            <person name="Zou H."/>
        </authorList>
    </citation>
    <scope>PHOSPHORYLATION [LARGE SCALE ANALYSIS] AT SER-152; SER-283; THR-400; SER-1556; SER-1651; SER-1697; SER-1766; SER-1769 AND SER-2238</scope>
    <scope>IDENTIFICATION BY MASS SPECTROMETRY [LARGE SCALE ANALYSIS]</scope>
    <source>
        <tissue>Liver</tissue>
    </source>
</reference>
<reference key="31">
    <citation type="journal article" date="2014" name="Mol. Cell. Proteomics">
        <title>Immunoaffinity enrichment and mass spectrometry analysis of protein methylation.</title>
        <authorList>
            <person name="Guo A."/>
            <person name="Gu H."/>
            <person name="Zhou J."/>
            <person name="Mulhern D."/>
            <person name="Wang Y."/>
            <person name="Lee K.A."/>
            <person name="Yang V."/>
            <person name="Aguiar M."/>
            <person name="Kornhauser J."/>
            <person name="Jia X."/>
            <person name="Ren J."/>
            <person name="Beausoleil S.A."/>
            <person name="Silva J.C."/>
            <person name="Vemulapalli V."/>
            <person name="Bedford M.T."/>
            <person name="Comb M.J."/>
        </authorList>
    </citation>
    <scope>METHYLATION [LARGE SCALE ANALYSIS] AT ARG-950</scope>
    <scope>IDENTIFICATION BY MASS SPECTROMETRY [LARGE SCALE ANALYSIS]</scope>
    <source>
        <tissue>Colon carcinoma</tissue>
    </source>
</reference>
<reference key="32">
    <citation type="journal article" date="2015" name="Genet. Med.">
        <title>Whole-exome sequencing in undiagnosed genetic diseases: interpreting 119 trios.</title>
        <authorList>
            <person name="Zhu X."/>
            <person name="Petrovski S."/>
            <person name="Xie P."/>
            <person name="Ruzzo E.K."/>
            <person name="Lu Y.F."/>
            <person name="McSweeney K.M."/>
            <person name="Ben-Zeev B."/>
            <person name="Nissenkorn A."/>
            <person name="Anikster Y."/>
            <person name="Oz-Levi D."/>
            <person name="Dhindsa R.S."/>
            <person name="Hitomi Y."/>
            <person name="Schoch K."/>
            <person name="Spillmann R.C."/>
            <person name="Heimer G."/>
            <person name="Marek-Yagel D."/>
            <person name="Tzadok M."/>
            <person name="Han Y."/>
            <person name="Worley G."/>
            <person name="Goldstein J."/>
            <person name="Jiang Y.H."/>
            <person name="Lancet D."/>
            <person name="Pras E."/>
            <person name="Shashi V."/>
            <person name="McHale D."/>
            <person name="Need A.C."/>
            <person name="Goldstein D.B."/>
        </authorList>
    </citation>
    <scope>INVOLVEMENT IN ZTTKS</scope>
</reference>
<reference key="33">
    <citation type="journal article" date="2015" name="Mol. Cell. Proteomics">
        <title>System-wide analysis of SUMOylation dynamics in response to replication stress reveals novel small ubiquitin-like modified target proteins and acceptor lysines relevant for genome stability.</title>
        <authorList>
            <person name="Xiao Z."/>
            <person name="Chang J.G."/>
            <person name="Hendriks I.A."/>
            <person name="Sigurdsson J.O."/>
            <person name="Olsen J.V."/>
            <person name="Vertegaal A.C."/>
        </authorList>
    </citation>
    <scope>SUMOYLATION [LARGE SCALE ANALYSIS] AT LYS-2149</scope>
    <scope>IDENTIFICATION BY MASS SPECTROMETRY [LARGE SCALE ANALYSIS]</scope>
</reference>
<reference key="34">
    <citation type="journal article" date="2016" name="Am. J. Hum. Genet.">
        <title>De novo mutations in SON disrupt RNA splicing of genes essential for brain development and metabolism, causing an intellectual-disability syndrome.</title>
        <authorList>
            <consortium name="University of Washington Center for Mendelian Genomics"/>
            <consortium name="Deciphering Developmental Disorders Study"/>
            <person name="Kim J.H."/>
            <person name="Shinde D.N."/>
            <person name="Reijnders M.R."/>
            <person name="Hauser N.S."/>
            <person name="Belmonte R.L."/>
            <person name="Wilson G.R."/>
            <person name="Bosch D.G."/>
            <person name="Bubulya P.A."/>
            <person name="Shashi V."/>
            <person name="Petrovski S."/>
            <person name="Stone J.K."/>
            <person name="Park E.Y."/>
            <person name="Veltman J.A."/>
            <person name="Sinnema M."/>
            <person name="Stumpel C.T."/>
            <person name="Draaisma J.M."/>
            <person name="Nicolai J."/>
            <person name="Yntema H.G."/>
            <person name="Lindstrom K."/>
            <person name="de Vries B.B."/>
            <person name="Jewett T."/>
            <person name="Santoro S.L."/>
            <person name="Vogt J."/>
            <person name="Bachman K.K."/>
            <person name="Seeley A.H."/>
            <person name="Krokosky A."/>
            <person name="Turner C."/>
            <person name="Rohena L."/>
            <person name="Hempel M."/>
            <person name="Kortuem F."/>
            <person name="Lessel D."/>
            <person name="Neu A."/>
            <person name="Strom T.M."/>
            <person name="Wieczorek D."/>
            <person name="Bramswig N."/>
            <person name="Laccone F.A."/>
            <person name="Behunova J."/>
            <person name="Rehder H."/>
            <person name="Gordon C.T."/>
            <person name="Rio M."/>
            <person name="Romana S."/>
            <person name="Tang S."/>
            <person name="El-Khechen D."/>
            <person name="Cho M.T."/>
            <person name="McWalter K."/>
            <person name="Douglas G."/>
            <person name="Baskin B."/>
            <person name="Begtrup A."/>
            <person name="Funari T."/>
            <person name="Schoch K."/>
            <person name="Stegmann A.P."/>
            <person name="Stevens S.J."/>
            <person name="Zhang D.E."/>
            <person name="Traver D."/>
            <person name="Yao X."/>
            <person name="MacArthur D.G."/>
            <person name="Brunner H.G."/>
            <person name="Mancini G.M."/>
            <person name="Myers R.M."/>
            <person name="Owen L.B."/>
            <person name="Lim S.T."/>
            <person name="Stachura D.L."/>
            <person name="Vissers L.E."/>
            <person name="Ahn E.Y."/>
        </authorList>
    </citation>
    <scope>FUNCTION</scope>
    <scope>INVOLVEMENT IN ZTTKS</scope>
</reference>
<reference key="35">
    <citation type="journal article" date="2016" name="Am. J. Hum. Genet.">
        <title>De novo truncating variants in SON cause intellectual disability, congenital malformations, and failure to thrive.</title>
        <authorList>
            <person name="Tokita M.J."/>
            <person name="Braxton A.A."/>
            <person name="Shao Y."/>
            <person name="Lewis A.M."/>
            <person name="Vincent M."/>
            <person name="Kuery S."/>
            <person name="Besnard T."/>
            <person name="Isidor B."/>
            <person name="Latypova X."/>
            <person name="Bezieau S."/>
            <person name="Liu P."/>
            <person name="Motter C.S."/>
            <person name="Melver C.W."/>
            <person name="Robin N.H."/>
            <person name="Infante E.M."/>
            <person name="McGuire M."/>
            <person name="El-Gharbawy A."/>
            <person name="Littlejohn R.O."/>
            <person name="McLean S.D."/>
            <person name="Bi W."/>
            <person name="Bacino C.A."/>
            <person name="Lalani S.R."/>
            <person name="Scott D.A."/>
            <person name="Eng C.M."/>
            <person name="Yang Y."/>
            <person name="Schaaf C.P."/>
            <person name="Walkiewicz M.A."/>
        </authorList>
    </citation>
    <scope>INVOLVEMENT IN ZTTKS</scope>
    <scope>VARIANTS ZTTKS SER-1637 AND TYR-1843</scope>
</reference>
<reference key="36">
    <citation type="journal article" date="2016" name="Am. J. Med. Genet. A">
        <title>Establishing SON in 21q22.11 as a cause a new syndromic form of intellectual disability: Possible contribution to Braddock-Carey syndrome phenotype.</title>
        <authorList>
            <person name="Takenouchi T."/>
            <person name="Miura K."/>
            <person name="Uehara T."/>
            <person name="Mizuno S."/>
            <person name="Kosaki K."/>
        </authorList>
    </citation>
    <scope>INVOLVEMENT IN ZTTKS</scope>
</reference>
<reference key="37">
    <citation type="journal article" date="2017" name="Nat. Struct. Mol. Biol.">
        <title>Site-specific mapping of the human SUMO proteome reveals co-modification with phosphorylation.</title>
        <authorList>
            <person name="Hendriks I.A."/>
            <person name="Lyon D."/>
            <person name="Young C."/>
            <person name="Jensen L.J."/>
            <person name="Vertegaal A.C."/>
            <person name="Nielsen M.L."/>
        </authorList>
    </citation>
    <scope>SUMOYLATION [LARGE SCALE ANALYSIS] AT LYS-64; LYS-2055; LYS-2092 AND LYS-2149</scope>
    <scope>IDENTIFICATION BY MASS SPECTROMETRY [LARGE SCALE ANALYSIS]</scope>
</reference>
<reference key="38">
    <citation type="journal article" date="2021" name="Nucleic Acids Res.">
        <title>SANS (USH1G) regulates pre-mRNA splicing by mediating the intra-nuclear transfer of tri-snRNP complexes.</title>
        <authorList>
            <person name="Yildirim A."/>
            <person name="Mozaffari-Jovin S."/>
            <person name="Wallisch A.K."/>
            <person name="Schaefer J."/>
            <person name="Ludwig S.E.J."/>
            <person name="Urlaub H."/>
            <person name="Luehrmann R."/>
            <person name="Wolfrum U."/>
        </authorList>
    </citation>
    <scope>INTERACTION WITH USH1G</scope>
    <scope>SUBCELLULAR LOCATION</scope>
    <scope>IDENTIFICATION BY MASS SPECTROMETRY</scope>
</reference>
<accession>P18583</accession>
<accession>D3DSF5</accession>
<accession>D3DSF6</accession>
<accession>E7ETE8</accession>
<accession>E7EU67</accession>
<accession>E7EVW3</accession>
<accession>E9PFQ2</accession>
<accession>O14487</accession>
<accession>O95981</accession>
<accession>Q14120</accession>
<accession>Q6PKE0</accession>
<accession>Q9H7B1</accession>
<accession>Q9P070</accession>
<accession>Q9P072</accession>
<accession>Q9UKP9</accession>
<accession>Q9UPY0</accession>